<feature type="initiator methionine" description="Removed" evidence="29 32">
    <location>
        <position position="1"/>
    </location>
</feature>
<feature type="chain" id="PRO_0000186068" description="Histone-lysine N-methyltransferase EHMT2">
    <location>
        <begin position="2"/>
        <end position="1210"/>
    </location>
</feature>
<feature type="repeat" description="ANK 1">
    <location>
        <begin position="649"/>
        <end position="678"/>
    </location>
</feature>
<feature type="repeat" description="ANK 2">
    <location>
        <begin position="684"/>
        <end position="713"/>
    </location>
</feature>
<feature type="repeat" description="ANK 3">
    <location>
        <begin position="717"/>
        <end position="746"/>
    </location>
</feature>
<feature type="repeat" description="ANK 4">
    <location>
        <begin position="750"/>
        <end position="780"/>
    </location>
</feature>
<feature type="repeat" description="ANK 5">
    <location>
        <begin position="784"/>
        <end position="813"/>
    </location>
</feature>
<feature type="repeat" description="ANK 6">
    <location>
        <begin position="817"/>
        <end position="846"/>
    </location>
</feature>
<feature type="repeat" description="ANK 7">
    <location>
        <begin position="850"/>
        <end position="879"/>
    </location>
</feature>
<feature type="domain" description="Pre-SET" evidence="3">
    <location>
        <begin position="972"/>
        <end position="1035"/>
    </location>
</feature>
<feature type="domain" description="SET" evidence="4">
    <location>
        <begin position="1038"/>
        <end position="1155"/>
    </location>
</feature>
<feature type="domain" description="Post-SET">
    <location>
        <begin position="1164"/>
        <end position="1180"/>
    </location>
</feature>
<feature type="region of interest" description="Disordered" evidence="5">
    <location>
        <begin position="1"/>
        <end position="262"/>
    </location>
</feature>
<feature type="region of interest" description="Disordered" evidence="5">
    <location>
        <begin position="280"/>
        <end position="386"/>
    </location>
</feature>
<feature type="region of interest" description="Disordered" evidence="5">
    <location>
        <begin position="548"/>
        <end position="608"/>
    </location>
</feature>
<feature type="region of interest" description="Histone H3K9me binding" evidence="1">
    <location>
        <begin position="817"/>
        <end position="819"/>
    </location>
</feature>
<feature type="region of interest" description="Interaction with histone H3" evidence="1">
    <location>
        <begin position="1074"/>
        <end position="1093"/>
    </location>
</feature>
<feature type="region of interest" description="Interaction with histone H3" evidence="1">
    <location>
        <begin position="1154"/>
        <end position="1157"/>
    </location>
</feature>
<feature type="compositionally biased region" description="Low complexity" evidence="5">
    <location>
        <begin position="1"/>
        <end position="23"/>
    </location>
</feature>
<feature type="compositionally biased region" description="Basic and acidic residues" evidence="5">
    <location>
        <begin position="26"/>
        <end position="38"/>
    </location>
</feature>
<feature type="compositionally biased region" description="Low complexity" evidence="5">
    <location>
        <begin position="105"/>
        <end position="128"/>
    </location>
</feature>
<feature type="compositionally biased region" description="Low complexity" evidence="5">
    <location>
        <begin position="155"/>
        <end position="165"/>
    </location>
</feature>
<feature type="compositionally biased region" description="Basic and acidic residues" evidence="5">
    <location>
        <begin position="198"/>
        <end position="216"/>
    </location>
</feature>
<feature type="compositionally biased region" description="Basic and acidic residues" evidence="5">
    <location>
        <begin position="280"/>
        <end position="291"/>
    </location>
</feature>
<feature type="compositionally biased region" description="Acidic residues" evidence="5">
    <location>
        <begin position="298"/>
        <end position="327"/>
    </location>
</feature>
<feature type="compositionally biased region" description="Basic residues" evidence="5">
    <location>
        <begin position="338"/>
        <end position="347"/>
    </location>
</feature>
<feature type="binding site">
    <location>
        <position position="974"/>
    </location>
    <ligand>
        <name>Zn(2+)</name>
        <dbReference type="ChEBI" id="CHEBI:29105"/>
        <label>1</label>
    </ligand>
</feature>
<feature type="binding site">
    <location>
        <position position="974"/>
    </location>
    <ligand>
        <name>Zn(2+)</name>
        <dbReference type="ChEBI" id="CHEBI:29105"/>
        <label>2</label>
    </ligand>
</feature>
<feature type="binding site">
    <location>
        <position position="976"/>
    </location>
    <ligand>
        <name>Zn(2+)</name>
        <dbReference type="ChEBI" id="CHEBI:29105"/>
        <label>1</label>
    </ligand>
</feature>
<feature type="binding site">
    <location>
        <position position="980"/>
    </location>
    <ligand>
        <name>Zn(2+)</name>
        <dbReference type="ChEBI" id="CHEBI:29105"/>
        <label>1</label>
    </ligand>
</feature>
<feature type="binding site">
    <location>
        <position position="980"/>
    </location>
    <ligand>
        <name>Zn(2+)</name>
        <dbReference type="ChEBI" id="CHEBI:29105"/>
        <label>3</label>
    </ligand>
</feature>
<feature type="binding site">
    <location>
        <position position="985"/>
    </location>
    <ligand>
        <name>Zn(2+)</name>
        <dbReference type="ChEBI" id="CHEBI:29105"/>
        <label>1</label>
    </ligand>
</feature>
<feature type="binding site">
    <location>
        <position position="987"/>
    </location>
    <ligand>
        <name>Zn(2+)</name>
        <dbReference type="ChEBI" id="CHEBI:29105"/>
        <label>2</label>
    </ligand>
</feature>
<feature type="binding site">
    <location>
        <position position="1017"/>
    </location>
    <ligand>
        <name>Zn(2+)</name>
        <dbReference type="ChEBI" id="CHEBI:29105"/>
        <label>2</label>
    </ligand>
</feature>
<feature type="binding site">
    <location>
        <position position="1017"/>
    </location>
    <ligand>
        <name>Zn(2+)</name>
        <dbReference type="ChEBI" id="CHEBI:29105"/>
        <label>3</label>
    </ligand>
</feature>
<feature type="binding site">
    <location>
        <position position="1021"/>
    </location>
    <ligand>
        <name>Zn(2+)</name>
        <dbReference type="ChEBI" id="CHEBI:29105"/>
        <label>2</label>
    </ligand>
</feature>
<feature type="binding site">
    <location>
        <position position="1023"/>
    </location>
    <ligand>
        <name>Zn(2+)</name>
        <dbReference type="ChEBI" id="CHEBI:29105"/>
        <label>3</label>
    </ligand>
</feature>
<feature type="binding site">
    <location>
        <position position="1027"/>
    </location>
    <ligand>
        <name>Zn(2+)</name>
        <dbReference type="ChEBI" id="CHEBI:29105"/>
        <label>3</label>
    </ligand>
</feature>
<feature type="binding site">
    <location>
        <begin position="1048"/>
        <end position="1050"/>
    </location>
    <ligand>
        <name>S-adenosyl-L-methionine</name>
        <dbReference type="ChEBI" id="CHEBI:59789"/>
    </ligand>
</feature>
<feature type="binding site">
    <location>
        <position position="1085"/>
    </location>
    <ligand>
        <name>S-adenosyl-L-methionine</name>
        <dbReference type="ChEBI" id="CHEBI:59789"/>
    </ligand>
</feature>
<feature type="binding site">
    <location>
        <begin position="1112"/>
        <end position="1113"/>
    </location>
    <ligand>
        <name>S-adenosyl-L-methionine</name>
        <dbReference type="ChEBI" id="CHEBI:59789"/>
    </ligand>
</feature>
<feature type="binding site">
    <location>
        <position position="1115"/>
    </location>
    <ligand>
        <name>Zn(2+)</name>
        <dbReference type="ChEBI" id="CHEBI:29105"/>
        <label>4</label>
    </ligand>
</feature>
<feature type="binding site">
    <location>
        <position position="1168"/>
    </location>
    <ligand>
        <name>Zn(2+)</name>
        <dbReference type="ChEBI" id="CHEBI:29105"/>
        <label>4</label>
    </ligand>
</feature>
<feature type="binding site">
    <location>
        <position position="1169"/>
    </location>
    <ligand>
        <name>S-adenosyl-L-methionine</name>
        <dbReference type="ChEBI" id="CHEBI:59789"/>
    </ligand>
</feature>
<feature type="binding site">
    <location>
        <position position="1170"/>
    </location>
    <ligand>
        <name>Zn(2+)</name>
        <dbReference type="ChEBI" id="CHEBI:29105"/>
        <label>4</label>
    </ligand>
</feature>
<feature type="binding site">
    <location>
        <position position="1175"/>
    </location>
    <ligand>
        <name>Zn(2+)</name>
        <dbReference type="ChEBI" id="CHEBI:29105"/>
        <label>4</label>
    </ligand>
</feature>
<feature type="site" description="Histone H3K9me binding" evidence="1">
    <location>
        <position position="1067"/>
    </location>
</feature>
<feature type="modified residue" description="N-acetylalanine" evidence="29 32">
    <location>
        <position position="2"/>
    </location>
</feature>
<feature type="modified residue" description="Phosphoserine" evidence="34">
    <location>
        <position position="40"/>
    </location>
</feature>
<feature type="modified residue" description="Phosphothreonine" evidence="33">
    <location>
        <position position="44"/>
    </location>
</feature>
<feature type="modified residue" description="Phosphoserine" evidence="33">
    <location>
        <position position="47"/>
    </location>
</feature>
<feature type="modified residue" description="Phosphoserine" evidence="28 30 31 33">
    <location>
        <position position="140"/>
    </location>
</feature>
<feature type="modified residue" description="Phosphoserine" evidence="28">
    <location>
        <position position="173"/>
    </location>
</feature>
<feature type="modified residue" description="N6,N6,N6-trimethyllysine; by EHMT2; alternate" evidence="14">
    <location>
        <position position="185"/>
    </location>
</feature>
<feature type="modified residue" description="N6,N6-dimethyllysine; by EHMT2; alternate" evidence="14">
    <location>
        <position position="185"/>
    </location>
</feature>
<feature type="modified residue" description="Phosphoserine" evidence="28 30 31 33">
    <location>
        <position position="232"/>
    </location>
</feature>
<feature type="modified residue" description="Phosphoserine" evidence="33">
    <location>
        <position position="242"/>
    </location>
</feature>
<feature type="modified residue" description="Phosphoserine" evidence="26 28 30 31">
    <location>
        <position position="246"/>
    </location>
</feature>
<feature type="modified residue" description="Phosphoserine" evidence="33">
    <location>
        <position position="350"/>
    </location>
</feature>
<feature type="modified residue" description="Phosphoserine" evidence="2">
    <location>
        <position position="412"/>
    </location>
</feature>
<feature type="modified residue" description="Phosphoserine" evidence="31">
    <location>
        <position position="413"/>
    </location>
</feature>
<feature type="modified residue" description="Phosphothreonine" evidence="33">
    <location>
        <position position="555"/>
    </location>
</feature>
<feature type="modified residue" description="Phosphoserine" evidence="27">
    <location>
        <position position="569"/>
    </location>
</feature>
<feature type="modified residue" description="Phosphoserine" evidence="31">
    <location>
        <position position="1204"/>
    </location>
</feature>
<feature type="modified residue" description="Phosphothreonine" evidence="28">
    <location>
        <position position="1210"/>
    </location>
</feature>
<feature type="cross-link" description="Glycyl lysine isopeptide (Lys-Gly) (interchain with G-Cter in SUMO2)" evidence="35">
    <location>
        <position position="219"/>
    </location>
</feature>
<feature type="cross-link" description="Glycyl lysine isopeptide (Lys-Gly) (interchain with G-Cter in SUMO2)" evidence="35">
    <location>
        <position position="229"/>
    </location>
</feature>
<feature type="cross-link" description="Glycyl lysine isopeptide (Lys-Gly) (interchain with G-Cter in SUMO2)" evidence="35">
    <location>
        <position position="634"/>
    </location>
</feature>
<feature type="splice variant" id="VSP_002212" description="In isoform 3." evidence="23">
    <original>PPVPEKRP</original>
    <variation>VSGMGEMG</variation>
    <location>
        <begin position="195"/>
        <end position="202"/>
    </location>
</feature>
<feature type="splice variant" id="VSP_002213" description="In isoform 3." evidence="23">
    <location>
        <begin position="203"/>
        <end position="1210"/>
    </location>
</feature>
<feature type="splice variant" id="VSP_002211" description="In isoform 2." evidence="24">
    <location>
        <begin position="373"/>
        <end position="406"/>
    </location>
</feature>
<feature type="sequence variant" id="VAR_027973" description="In dbSNP:rs7887." evidence="7 9 10 22">
    <original>T</original>
    <variation>N</variation>
    <location>
        <position position="55"/>
    </location>
</feature>
<feature type="sequence variant" id="VAR_027974" description="In dbSNP:rs13919.">
    <original>Y</original>
    <variation>F</variation>
    <location>
        <position position="1165"/>
    </location>
</feature>
<feature type="mutagenesis site" description="Abolishes binding to histone H3K9me without affecting the histone methyltransferase activity." evidence="13">
    <original>W</original>
    <variation>A</variation>
    <location>
        <position position="786"/>
    </location>
</feature>
<feature type="mutagenesis site" description="Abolishes binding to histone H3K9me without affecting the histone methyltransferase activity." evidence="13">
    <original>W</original>
    <variation>A</variation>
    <location>
        <position position="791"/>
    </location>
</feature>
<feature type="mutagenesis site" description="Abolishes binding to histone H3K9me without affecting the histone methyltransferase activity." evidence="13">
    <original>E</original>
    <variation>A</variation>
    <location>
        <position position="794"/>
    </location>
</feature>
<feature type="mutagenesis site" description="Impairs binding to histone H3K9me." evidence="13">
    <original>E</original>
    <variation>R</variation>
    <location>
        <position position="817"/>
    </location>
</feature>
<feature type="mutagenesis site" description="Abolishes binding to histone H3K9me without affecting the histone methyltransferase activity." evidence="13">
    <original>W</original>
    <variation>A</variation>
    <location>
        <position position="824"/>
    </location>
</feature>
<feature type="mutagenesis site" description="Impairs binding to histone H3K9me." evidence="13">
    <original>D</original>
    <variation>R</variation>
    <location>
        <position position="852"/>
    </location>
</feature>
<feature type="sequence conflict" description="In Ref. 2; CAC86666." evidence="24" ref="2">
    <original>P</original>
    <variation>S</variation>
    <location>
        <position position="178"/>
    </location>
</feature>
<feature type="sequence conflict" description="In Ref. 2; CAC86666." evidence="24" ref="2">
    <original>C</original>
    <variation>R</variation>
    <location>
        <position position="985"/>
    </location>
</feature>
<feature type="sequence conflict" description="In Ref. 8; CAA49491." evidence="24" ref="8">
    <original>C</original>
    <variation>R</variation>
    <location>
        <position position="994"/>
    </location>
</feature>
<feature type="helix" evidence="38">
    <location>
        <begin position="420"/>
        <end position="422"/>
    </location>
</feature>
<feature type="helix" evidence="38">
    <location>
        <begin position="438"/>
        <end position="441"/>
    </location>
</feature>
<feature type="turn" evidence="38">
    <location>
        <begin position="442"/>
        <end position="444"/>
    </location>
</feature>
<feature type="strand" evidence="38">
    <location>
        <begin position="449"/>
        <end position="452"/>
    </location>
</feature>
<feature type="strand" evidence="38">
    <location>
        <begin position="455"/>
        <end position="458"/>
    </location>
</feature>
<feature type="helix" evidence="38">
    <location>
        <begin position="482"/>
        <end position="489"/>
    </location>
</feature>
<feature type="turn" evidence="38">
    <location>
        <begin position="495"/>
        <end position="497"/>
    </location>
</feature>
<feature type="strand" evidence="38">
    <location>
        <begin position="500"/>
        <end position="512"/>
    </location>
</feature>
<feature type="strand" evidence="38">
    <location>
        <begin position="515"/>
        <end position="519"/>
    </location>
</feature>
<feature type="helix" evidence="38">
    <location>
        <begin position="521"/>
        <end position="523"/>
    </location>
</feature>
<feature type="strand" evidence="38">
    <location>
        <begin position="525"/>
        <end position="527"/>
    </location>
</feature>
<feature type="strand" evidence="38">
    <location>
        <begin position="530"/>
        <end position="532"/>
    </location>
</feature>
<feature type="turn" evidence="38">
    <location>
        <begin position="534"/>
        <end position="536"/>
    </location>
</feature>
<feature type="helix" evidence="38">
    <location>
        <begin position="540"/>
        <end position="542"/>
    </location>
</feature>
<feature type="strand" evidence="38">
    <location>
        <begin position="544"/>
        <end position="548"/>
    </location>
</feature>
<feature type="strand" evidence="37">
    <location>
        <begin position="920"/>
        <end position="924"/>
    </location>
</feature>
<feature type="turn" evidence="37">
    <location>
        <begin position="926"/>
        <end position="929"/>
    </location>
</feature>
<feature type="strand" evidence="37">
    <location>
        <begin position="931"/>
        <end position="933"/>
    </location>
</feature>
<feature type="strand" evidence="37">
    <location>
        <begin position="937"/>
        <end position="943"/>
    </location>
</feature>
<feature type="strand" evidence="37">
    <location>
        <begin position="949"/>
        <end position="952"/>
    </location>
</feature>
<feature type="strand" evidence="37">
    <location>
        <begin position="957"/>
        <end position="960"/>
    </location>
</feature>
<feature type="helix" evidence="37">
    <location>
        <begin position="968"/>
        <end position="970"/>
    </location>
</feature>
<feature type="strand" evidence="36">
    <location>
        <begin position="977"/>
        <end position="980"/>
    </location>
</feature>
<feature type="helix" evidence="37">
    <location>
        <begin position="986"/>
        <end position="989"/>
    </location>
</feature>
<feature type="strand" evidence="40">
    <location>
        <begin position="991"/>
        <end position="993"/>
    </location>
</feature>
<feature type="strand" evidence="39">
    <location>
        <begin position="1004"/>
        <end position="1006"/>
    </location>
</feature>
<feature type="strand" evidence="37">
    <location>
        <begin position="1008"/>
        <end position="1010"/>
    </location>
</feature>
<feature type="strand" evidence="40">
    <location>
        <begin position="1013"/>
        <end position="1015"/>
    </location>
</feature>
<feature type="strand" evidence="37">
    <location>
        <begin position="1021"/>
        <end position="1023"/>
    </location>
</feature>
<feature type="strand" evidence="37">
    <location>
        <begin position="1027"/>
        <end position="1029"/>
    </location>
</feature>
<feature type="helix" evidence="37">
    <location>
        <begin position="1032"/>
        <end position="1034"/>
    </location>
</feature>
<feature type="strand" evidence="37">
    <location>
        <begin position="1040"/>
        <end position="1044"/>
    </location>
</feature>
<feature type="strand" evidence="37">
    <location>
        <begin position="1046"/>
        <end position="1056"/>
    </location>
</feature>
<feature type="strand" evidence="37">
    <location>
        <begin position="1063"/>
        <end position="1067"/>
    </location>
</feature>
<feature type="strand" evidence="37">
    <location>
        <begin position="1069"/>
        <end position="1073"/>
    </location>
</feature>
<feature type="helix" evidence="37">
    <location>
        <begin position="1074"/>
        <end position="1077"/>
    </location>
</feature>
<feature type="strand" evidence="37">
    <location>
        <begin position="1086"/>
        <end position="1089"/>
    </location>
</feature>
<feature type="strand" evidence="40">
    <location>
        <begin position="1092"/>
        <end position="1094"/>
    </location>
</feature>
<feature type="strand" evidence="37">
    <location>
        <begin position="1097"/>
        <end position="1105"/>
    </location>
</feature>
<feature type="helix" evidence="37">
    <location>
        <begin position="1107"/>
        <end position="1110"/>
    </location>
</feature>
<feature type="strand" evidence="37">
    <location>
        <begin position="1118"/>
        <end position="1127"/>
    </location>
</feature>
<feature type="strand" evidence="37">
    <location>
        <begin position="1135"/>
        <end position="1142"/>
    </location>
</feature>
<feature type="helix" evidence="37">
    <location>
        <begin position="1156"/>
        <end position="1162"/>
    </location>
</feature>
<feature type="turn" evidence="37">
    <location>
        <begin position="1163"/>
        <end position="1165"/>
    </location>
</feature>
<feature type="strand" evidence="37">
    <location>
        <begin position="1176"/>
        <end position="1178"/>
    </location>
</feature>
<feature type="helix" evidence="37">
    <location>
        <begin position="1179"/>
        <end position="1189"/>
    </location>
</feature>
<gene>
    <name type="primary">EHMT2</name>
    <name type="synonym">BAT8</name>
    <name type="synonym">C6orf30</name>
    <name type="synonym">G9A</name>
    <name type="synonym">KMT1C</name>
    <name type="synonym">NG36</name>
</gene>
<accession>Q96KQ7</accession>
<accession>B0UZY2</accession>
<accession>Q14349</accession>
<accession>Q5JP83</accession>
<accession>Q5JQ92</accession>
<accession>Q5JQA1</accession>
<accession>Q5JQG3</accession>
<accession>Q6PK06</accession>
<accession>Q96MH5</accession>
<accession>Q96QD0</accession>
<accession>Q9UQL8</accession>
<accession>Q9Y331</accession>
<protein>
    <recommendedName>
        <fullName>Histone-lysine N-methyltransferase EHMT2</fullName>
        <ecNumber evidence="6 17">2.1.1.-</ecNumber>
        <ecNumber evidence="6 17">2.1.1.367</ecNumber>
    </recommendedName>
    <alternativeName>
        <fullName>Euchromatic histone-lysine N-methyltransferase 2</fullName>
    </alternativeName>
    <alternativeName>
        <fullName>HLA-B-associated transcript 8</fullName>
    </alternativeName>
    <alternativeName>
        <fullName>Histone H3-K9 methyltransferase 3</fullName>
        <shortName>H3-K9-HMTase 3</shortName>
    </alternativeName>
    <alternativeName>
        <fullName>Lysine N-methyltransferase 1C</fullName>
    </alternativeName>
    <alternativeName>
        <fullName>Protein G9a</fullName>
    </alternativeName>
</protein>
<keyword id="KW-0002">3D-structure</keyword>
<keyword id="KW-0007">Acetylation</keyword>
<keyword id="KW-0025">Alternative splicing</keyword>
<keyword id="KW-0040">ANK repeat</keyword>
<keyword id="KW-0156">Chromatin regulator</keyword>
<keyword id="KW-0158">Chromosome</keyword>
<keyword id="KW-1017">Isopeptide bond</keyword>
<keyword id="KW-0479">Metal-binding</keyword>
<keyword id="KW-0488">Methylation</keyword>
<keyword id="KW-0489">Methyltransferase</keyword>
<keyword id="KW-0539">Nucleus</keyword>
<keyword id="KW-0597">Phosphoprotein</keyword>
<keyword id="KW-1267">Proteomics identification</keyword>
<keyword id="KW-1185">Reference proteome</keyword>
<keyword id="KW-0677">Repeat</keyword>
<keyword id="KW-0949">S-adenosyl-L-methionine</keyword>
<keyword id="KW-0808">Transferase</keyword>
<keyword id="KW-0832">Ubl conjugation</keyword>
<keyword id="KW-0862">Zinc</keyword>
<reference key="1">
    <citation type="journal article" date="2001" name="Mamm. Genome">
        <title>Novel NG36/G9a gene products encoded within the human and mouse MHC class III regions.</title>
        <authorList>
            <person name="Brown S.E."/>
            <person name="Campbell R.D."/>
            <person name="Sanderson C.M."/>
        </authorList>
    </citation>
    <scope>NUCLEOTIDE SEQUENCE [MRNA] (ISOFORM 1)</scope>
    <scope>ALTERNATIVE SPLICING (ISOFORM 2)</scope>
    <scope>TISSUE SPECIFICITY</scope>
    <scope>VARIANT ASN-55</scope>
</reference>
<reference key="2">
    <citation type="journal article" date="2004" name="Nat. Genet.">
        <title>Complete sequencing and characterization of 21,243 full-length human cDNAs.</title>
        <authorList>
            <person name="Ota T."/>
            <person name="Suzuki Y."/>
            <person name="Nishikawa T."/>
            <person name="Otsuki T."/>
            <person name="Sugiyama T."/>
            <person name="Irie R."/>
            <person name="Wakamatsu A."/>
            <person name="Hayashi K."/>
            <person name="Sato H."/>
            <person name="Nagai K."/>
            <person name="Kimura K."/>
            <person name="Makita H."/>
            <person name="Sekine M."/>
            <person name="Obayashi M."/>
            <person name="Nishi T."/>
            <person name="Shibahara T."/>
            <person name="Tanaka T."/>
            <person name="Ishii S."/>
            <person name="Yamamoto J."/>
            <person name="Saito K."/>
            <person name="Kawai Y."/>
            <person name="Isono Y."/>
            <person name="Nakamura Y."/>
            <person name="Nagahari K."/>
            <person name="Murakami K."/>
            <person name="Yasuda T."/>
            <person name="Iwayanagi T."/>
            <person name="Wagatsuma M."/>
            <person name="Shiratori A."/>
            <person name="Sudo H."/>
            <person name="Hosoiri T."/>
            <person name="Kaku Y."/>
            <person name="Kodaira H."/>
            <person name="Kondo H."/>
            <person name="Sugawara M."/>
            <person name="Takahashi M."/>
            <person name="Kanda K."/>
            <person name="Yokoi T."/>
            <person name="Furuya T."/>
            <person name="Kikkawa E."/>
            <person name="Omura Y."/>
            <person name="Abe K."/>
            <person name="Kamihara K."/>
            <person name="Katsuta N."/>
            <person name="Sato K."/>
            <person name="Tanikawa M."/>
            <person name="Yamazaki M."/>
            <person name="Ninomiya K."/>
            <person name="Ishibashi T."/>
            <person name="Yamashita H."/>
            <person name="Murakawa K."/>
            <person name="Fujimori K."/>
            <person name="Tanai H."/>
            <person name="Kimata M."/>
            <person name="Watanabe M."/>
            <person name="Hiraoka S."/>
            <person name="Chiba Y."/>
            <person name="Ishida S."/>
            <person name="Ono Y."/>
            <person name="Takiguchi S."/>
            <person name="Watanabe S."/>
            <person name="Yosida M."/>
            <person name="Hotuta T."/>
            <person name="Kusano J."/>
            <person name="Kanehori K."/>
            <person name="Takahashi-Fujii A."/>
            <person name="Hara H."/>
            <person name="Tanase T.-O."/>
            <person name="Nomura Y."/>
            <person name="Togiya S."/>
            <person name="Komai F."/>
            <person name="Hara R."/>
            <person name="Takeuchi K."/>
            <person name="Arita M."/>
            <person name="Imose N."/>
            <person name="Musashino K."/>
            <person name="Yuuki H."/>
            <person name="Oshima A."/>
            <person name="Sasaki N."/>
            <person name="Aotsuka S."/>
            <person name="Yoshikawa Y."/>
            <person name="Matsunawa H."/>
            <person name="Ichihara T."/>
            <person name="Shiohata N."/>
            <person name="Sano S."/>
            <person name="Moriya S."/>
            <person name="Momiyama H."/>
            <person name="Satoh N."/>
            <person name="Takami S."/>
            <person name="Terashima Y."/>
            <person name="Suzuki O."/>
            <person name="Nakagawa S."/>
            <person name="Senoh A."/>
            <person name="Mizoguchi H."/>
            <person name="Goto Y."/>
            <person name="Shimizu F."/>
            <person name="Wakebe H."/>
            <person name="Hishigaki H."/>
            <person name="Watanabe T."/>
            <person name="Sugiyama A."/>
            <person name="Takemoto M."/>
            <person name="Kawakami B."/>
            <person name="Yamazaki M."/>
            <person name="Watanabe K."/>
            <person name="Kumagai A."/>
            <person name="Itakura S."/>
            <person name="Fukuzumi Y."/>
            <person name="Fujimori Y."/>
            <person name="Komiyama M."/>
            <person name="Tashiro H."/>
            <person name="Tanigami A."/>
            <person name="Fujiwara T."/>
            <person name="Ono T."/>
            <person name="Yamada K."/>
            <person name="Fujii Y."/>
            <person name="Ozaki K."/>
            <person name="Hirao M."/>
            <person name="Ohmori Y."/>
            <person name="Kawabata A."/>
            <person name="Hikiji T."/>
            <person name="Kobatake N."/>
            <person name="Inagaki H."/>
            <person name="Ikema Y."/>
            <person name="Okamoto S."/>
            <person name="Okitani R."/>
            <person name="Kawakami T."/>
            <person name="Noguchi S."/>
            <person name="Itoh T."/>
            <person name="Shigeta K."/>
            <person name="Senba T."/>
            <person name="Matsumura K."/>
            <person name="Nakajima Y."/>
            <person name="Mizuno T."/>
            <person name="Morinaga M."/>
            <person name="Sasaki M."/>
            <person name="Togashi T."/>
            <person name="Oyama M."/>
            <person name="Hata H."/>
            <person name="Watanabe M."/>
            <person name="Komatsu T."/>
            <person name="Mizushima-Sugano J."/>
            <person name="Satoh T."/>
            <person name="Shirai Y."/>
            <person name="Takahashi Y."/>
            <person name="Nakagawa K."/>
            <person name="Okumura K."/>
            <person name="Nagase T."/>
            <person name="Nomura N."/>
            <person name="Kikuchi H."/>
            <person name="Masuho Y."/>
            <person name="Yamashita R."/>
            <person name="Nakai K."/>
            <person name="Yada T."/>
            <person name="Nakamura Y."/>
            <person name="Ohara O."/>
            <person name="Isogai T."/>
            <person name="Sugano S."/>
        </authorList>
    </citation>
    <scope>NUCLEOTIDE SEQUENCE [LARGE SCALE MRNA] (ISOFORM 3)</scope>
    <source>
        <tissue>Salivary gland</tissue>
    </source>
</reference>
<reference key="3">
    <citation type="journal article" date="2003" name="Genome Res.">
        <title>Analysis of the gene-dense major histocompatibility complex class III region and its comparison to mouse.</title>
        <authorList>
            <person name="Xie T."/>
            <person name="Rowen L."/>
            <person name="Aguado B."/>
            <person name="Ahearn M.E."/>
            <person name="Madan A."/>
            <person name="Qin S."/>
            <person name="Campbell R.D."/>
            <person name="Hood L."/>
        </authorList>
    </citation>
    <scope>NUCLEOTIDE SEQUENCE [LARGE SCALE GENOMIC DNA]</scope>
</reference>
<reference key="4">
    <citation type="submission" date="2005-07" db="EMBL/GenBank/DDBJ databases">
        <authorList>
            <person name="Mural R.J."/>
            <person name="Istrail S."/>
            <person name="Sutton G.G."/>
            <person name="Florea L."/>
            <person name="Halpern A.L."/>
            <person name="Mobarry C.M."/>
            <person name="Lippert R."/>
            <person name="Walenz B."/>
            <person name="Shatkay H."/>
            <person name="Dew I."/>
            <person name="Miller J.R."/>
            <person name="Flanigan M.J."/>
            <person name="Edwards N.J."/>
            <person name="Bolanos R."/>
            <person name="Fasulo D."/>
            <person name="Halldorsson B.V."/>
            <person name="Hannenhalli S."/>
            <person name="Turner R."/>
            <person name="Yooseph S."/>
            <person name="Lu F."/>
            <person name="Nusskern D.R."/>
            <person name="Shue B.C."/>
            <person name="Zheng X.H."/>
            <person name="Zhong F."/>
            <person name="Delcher A.L."/>
            <person name="Huson D.H."/>
            <person name="Kravitz S.A."/>
            <person name="Mouchard L."/>
            <person name="Reinert K."/>
            <person name="Remington K.A."/>
            <person name="Clark A.G."/>
            <person name="Waterman M.S."/>
            <person name="Eichler E.E."/>
            <person name="Adams M.D."/>
            <person name="Hunkapiller M.W."/>
            <person name="Myers E.W."/>
            <person name="Venter J.C."/>
        </authorList>
    </citation>
    <scope>NUCLEOTIDE SEQUENCE [LARGE SCALE GENOMIC DNA]</scope>
</reference>
<reference key="5">
    <citation type="submission" date="1999-09" db="EMBL/GenBank/DDBJ databases">
        <title>Homo sapiens 2,229,817bp genomic DNA of 6p21.3 HLA class I region.</title>
        <authorList>
            <person name="Hirakawa M."/>
            <person name="Yamaguchi H."/>
            <person name="Imai K."/>
            <person name="Shimada J."/>
            <person name="Shiina S."/>
            <person name="Tamiya G."/>
            <person name="Oka A."/>
            <person name="Inoko H."/>
        </authorList>
    </citation>
    <scope>NUCLEOTIDE SEQUENCE [LARGE SCALE GENOMIC DNA]</scope>
    <scope>VARIANT ASN-55</scope>
</reference>
<reference key="6">
    <citation type="journal article" date="2003" name="Nature">
        <title>The DNA sequence and analysis of human chromosome 6.</title>
        <authorList>
            <person name="Mungall A.J."/>
            <person name="Palmer S.A."/>
            <person name="Sims S.K."/>
            <person name="Edwards C.A."/>
            <person name="Ashurst J.L."/>
            <person name="Wilming L."/>
            <person name="Jones M.C."/>
            <person name="Horton R."/>
            <person name="Hunt S.E."/>
            <person name="Scott C.E."/>
            <person name="Gilbert J.G.R."/>
            <person name="Clamp M.E."/>
            <person name="Bethel G."/>
            <person name="Milne S."/>
            <person name="Ainscough R."/>
            <person name="Almeida J.P."/>
            <person name="Ambrose K.D."/>
            <person name="Andrews T.D."/>
            <person name="Ashwell R.I.S."/>
            <person name="Babbage A.K."/>
            <person name="Bagguley C.L."/>
            <person name="Bailey J."/>
            <person name="Banerjee R."/>
            <person name="Barker D.J."/>
            <person name="Barlow K.F."/>
            <person name="Bates K."/>
            <person name="Beare D.M."/>
            <person name="Beasley H."/>
            <person name="Beasley O."/>
            <person name="Bird C.P."/>
            <person name="Blakey S.E."/>
            <person name="Bray-Allen S."/>
            <person name="Brook J."/>
            <person name="Brown A.J."/>
            <person name="Brown J.Y."/>
            <person name="Burford D.C."/>
            <person name="Burrill W."/>
            <person name="Burton J."/>
            <person name="Carder C."/>
            <person name="Carter N.P."/>
            <person name="Chapman J.C."/>
            <person name="Clark S.Y."/>
            <person name="Clark G."/>
            <person name="Clee C.M."/>
            <person name="Clegg S."/>
            <person name="Cobley V."/>
            <person name="Collier R.E."/>
            <person name="Collins J.E."/>
            <person name="Colman L.K."/>
            <person name="Corby N.R."/>
            <person name="Coville G.J."/>
            <person name="Culley K.M."/>
            <person name="Dhami P."/>
            <person name="Davies J."/>
            <person name="Dunn M."/>
            <person name="Earthrowl M.E."/>
            <person name="Ellington A.E."/>
            <person name="Evans K.A."/>
            <person name="Faulkner L."/>
            <person name="Francis M.D."/>
            <person name="Frankish A."/>
            <person name="Frankland J."/>
            <person name="French L."/>
            <person name="Garner P."/>
            <person name="Garnett J."/>
            <person name="Ghori M.J."/>
            <person name="Gilby L.M."/>
            <person name="Gillson C.J."/>
            <person name="Glithero R.J."/>
            <person name="Grafham D.V."/>
            <person name="Grant M."/>
            <person name="Gribble S."/>
            <person name="Griffiths C."/>
            <person name="Griffiths M.N.D."/>
            <person name="Hall R."/>
            <person name="Halls K.S."/>
            <person name="Hammond S."/>
            <person name="Harley J.L."/>
            <person name="Hart E.A."/>
            <person name="Heath P.D."/>
            <person name="Heathcott R."/>
            <person name="Holmes S.J."/>
            <person name="Howden P.J."/>
            <person name="Howe K.L."/>
            <person name="Howell G.R."/>
            <person name="Huckle E."/>
            <person name="Humphray S.J."/>
            <person name="Humphries M.D."/>
            <person name="Hunt A.R."/>
            <person name="Johnson C.M."/>
            <person name="Joy A.A."/>
            <person name="Kay M."/>
            <person name="Keenan S.J."/>
            <person name="Kimberley A.M."/>
            <person name="King A."/>
            <person name="Laird G.K."/>
            <person name="Langford C."/>
            <person name="Lawlor S."/>
            <person name="Leongamornlert D.A."/>
            <person name="Leversha M."/>
            <person name="Lloyd C.R."/>
            <person name="Lloyd D.M."/>
            <person name="Loveland J.E."/>
            <person name="Lovell J."/>
            <person name="Martin S."/>
            <person name="Mashreghi-Mohammadi M."/>
            <person name="Maslen G.L."/>
            <person name="Matthews L."/>
            <person name="McCann O.T."/>
            <person name="McLaren S.J."/>
            <person name="McLay K."/>
            <person name="McMurray A."/>
            <person name="Moore M.J.F."/>
            <person name="Mullikin J.C."/>
            <person name="Niblett D."/>
            <person name="Nickerson T."/>
            <person name="Novik K.L."/>
            <person name="Oliver K."/>
            <person name="Overton-Larty E.K."/>
            <person name="Parker A."/>
            <person name="Patel R."/>
            <person name="Pearce A.V."/>
            <person name="Peck A.I."/>
            <person name="Phillimore B.J.C.T."/>
            <person name="Phillips S."/>
            <person name="Plumb R.W."/>
            <person name="Porter K.M."/>
            <person name="Ramsey Y."/>
            <person name="Ranby S.A."/>
            <person name="Rice C.M."/>
            <person name="Ross M.T."/>
            <person name="Searle S.M."/>
            <person name="Sehra H.K."/>
            <person name="Sheridan E."/>
            <person name="Skuce C.D."/>
            <person name="Smith S."/>
            <person name="Smith M."/>
            <person name="Spraggon L."/>
            <person name="Squares S.L."/>
            <person name="Steward C.A."/>
            <person name="Sycamore N."/>
            <person name="Tamlyn-Hall G."/>
            <person name="Tester J."/>
            <person name="Theaker A.J."/>
            <person name="Thomas D.W."/>
            <person name="Thorpe A."/>
            <person name="Tracey A."/>
            <person name="Tromans A."/>
            <person name="Tubby B."/>
            <person name="Wall M."/>
            <person name="Wallis J.M."/>
            <person name="West A.P."/>
            <person name="White S.S."/>
            <person name="Whitehead S.L."/>
            <person name="Whittaker H."/>
            <person name="Wild A."/>
            <person name="Willey D.J."/>
            <person name="Wilmer T.E."/>
            <person name="Wood J.M."/>
            <person name="Wray P.W."/>
            <person name="Wyatt J.C."/>
            <person name="Young L."/>
            <person name="Younger R.M."/>
            <person name="Bentley D.R."/>
            <person name="Coulson A."/>
            <person name="Durbin R.M."/>
            <person name="Hubbard T."/>
            <person name="Sulston J.E."/>
            <person name="Dunham I."/>
            <person name="Rogers J."/>
            <person name="Beck S."/>
        </authorList>
    </citation>
    <scope>NUCLEOTIDE SEQUENCE [LARGE SCALE GENOMIC DNA]</scope>
    <scope>VARIANT ASN-55</scope>
</reference>
<reference key="7">
    <citation type="journal article" date="2004" name="Genome Res.">
        <title>The status, quality, and expansion of the NIH full-length cDNA project: the Mammalian Gene Collection (MGC).</title>
        <authorList>
            <consortium name="The MGC Project Team"/>
        </authorList>
    </citation>
    <scope>NUCLEOTIDE SEQUENCE [LARGE SCALE MRNA] OF 6-1210 (ISOFORM 1)</scope>
    <scope>VARIANT ASN-55</scope>
    <source>
        <tissue>Muscle</tissue>
        <tissue>Uterus</tissue>
    </source>
</reference>
<reference key="8">
    <citation type="journal article" date="1993" name="Biochem. J.">
        <title>The G9a gene in the human major histocompatibility complex encodes a novel protein containing ankyrin-like repeats.</title>
        <authorList>
            <person name="Milner C.M."/>
            <person name="Campbell R.D."/>
        </authorList>
    </citation>
    <scope>NUCLEOTIDE SEQUENCE [MRNA] OF 195-1210</scope>
    <scope>FUNCTION</scope>
    <source>
        <tissue>Histiocytic lymphoma</tissue>
    </source>
</reference>
<reference key="9">
    <citation type="journal article" date="2001" name="J. Biol. Chem.">
        <title>Set domain-containing protein, G9a, is a novel lysine-preferring mammalian histone methyltransferase with hyperactivity and specific selectivity to lysines 9 and 27 of histone H3.</title>
        <authorList>
            <person name="Tachibana M."/>
            <person name="Sugimoto K."/>
            <person name="Fukushima T."/>
            <person name="Shinkai Y."/>
        </authorList>
    </citation>
    <scope>FUNCTION</scope>
    <scope>CATALYTIC ACTIVITY</scope>
    <scope>SUBCELLULAR LOCATION</scope>
</reference>
<reference key="10">
    <citation type="journal article" date="2002" name="Science">
        <title>A complex with chromatin modifiers that occupies E2F- and Myc-responsive genes in G0 cells.</title>
        <authorList>
            <person name="Ogawa H."/>
            <person name="Ishiguro K."/>
            <person name="Gaubatz S."/>
            <person name="Livingston D.M."/>
            <person name="Nakatani Y."/>
        </authorList>
    </citation>
    <scope>IDENTIFICATION IN COMPLEX WITH E2F6; TFDP1; MAX; MGA; EHMT1; CBX3; RING1; RNF2; MBLR; L3MBTL2 AND YAF2</scope>
</reference>
<reference key="11">
    <citation type="journal article" date="2006" name="EMBO J.">
        <title>Gfi1b alters histone methylation at target gene promoters and sites of gamma-satellite containing heterochromatin.</title>
        <authorList>
            <person name="Vassen L."/>
            <person name="Fiolka K."/>
            <person name="Moeroey T."/>
        </authorList>
    </citation>
    <scope>INTERACTION WITH GFI1B</scope>
</reference>
<reference key="12">
    <citation type="journal article" date="2006" name="J. Biol. Chem.">
        <title>Zinc finger protein Wiz links G9a/GLP histone methyltransferases to the co-repressor molecule CtBP.</title>
        <authorList>
            <person name="Ueda J."/>
            <person name="Tachibana M."/>
            <person name="Ikura T."/>
            <person name="Shinkai Y."/>
        </authorList>
    </citation>
    <scope>INTERACTION WITH WIZ AND EHMT1</scope>
</reference>
<reference key="13">
    <citation type="journal article" date="2006" name="Nat. Biotechnol.">
        <title>A probability-based approach for high-throughput protein phosphorylation analysis and site localization.</title>
        <authorList>
            <person name="Beausoleil S.A."/>
            <person name="Villen J."/>
            <person name="Gerber S.A."/>
            <person name="Rush J."/>
            <person name="Gygi S.P."/>
        </authorList>
    </citation>
    <scope>PHOSPHORYLATION [LARGE SCALE ANALYSIS] AT SER-246</scope>
    <scope>IDENTIFICATION BY MASS SPECTROMETRY [LARGE SCALE ANALYSIS]</scope>
    <source>
        <tissue>Cervix carcinoma</tissue>
    </source>
</reference>
<reference key="14">
    <citation type="journal article" date="2007" name="Science">
        <title>ATM and ATR substrate analysis reveals extensive protein networks responsive to DNA damage.</title>
        <authorList>
            <person name="Matsuoka S."/>
            <person name="Ballif B.A."/>
            <person name="Smogorzewska A."/>
            <person name="McDonald E.R. III"/>
            <person name="Hurov K.E."/>
            <person name="Luo J."/>
            <person name="Bakalarski C.E."/>
            <person name="Zhao Z."/>
            <person name="Solimini N."/>
            <person name="Lerenthal Y."/>
            <person name="Shiloh Y."/>
            <person name="Gygi S.P."/>
            <person name="Elledge S.J."/>
        </authorList>
    </citation>
    <scope>PHOSPHORYLATION [LARGE SCALE ANALYSIS] AT SER-569</scope>
    <scope>IDENTIFICATION BY MASS SPECTROMETRY [LARGE SCALE ANALYSIS]</scope>
    <source>
        <tissue>Embryonic kidney</tissue>
    </source>
</reference>
<reference key="15">
    <citation type="journal article" date="2008" name="Mol. Cell">
        <title>CDYL bridges REST and histone methyltransferases for gene repression and suppression of cellular transformation.</title>
        <authorList>
            <person name="Mulligan P."/>
            <person name="Westbrook T.F."/>
            <person name="Ottinger M."/>
            <person name="Pavlova N."/>
            <person name="Chang B."/>
            <person name="Macia E."/>
            <person name="Shi Y.J."/>
            <person name="Barretina J."/>
            <person name="Liu J."/>
            <person name="Howley P.M."/>
            <person name="Elledge S.J."/>
            <person name="Shi Y."/>
        </authorList>
    </citation>
    <scope>INTERACTION WITH CDYL AND REST</scope>
    <scope>IDENTIFICATION IN A COMPLEX WITH REST; CDYL; SETB1; EHMT1 AND WIZ</scope>
</reference>
<reference key="16">
    <citation type="journal article" date="2008" name="Nat. Chem. Biol.">
        <title>Protein lysine methyltransferase G9a acts on non-histone targets.</title>
        <authorList>
            <person name="Rathert P."/>
            <person name="Dhayalan A."/>
            <person name="Murakami M."/>
            <person name="Zhang X."/>
            <person name="Tamas R."/>
            <person name="Jurkowska R."/>
            <person name="Komatsu Y."/>
            <person name="Shinkai Y."/>
            <person name="Cheng X."/>
            <person name="Jeltsch A."/>
        </authorList>
    </citation>
    <scope>FUNCTION</scope>
    <scope>METHYLATION AT LYS-185</scope>
    <scope>IDENTIFICATION BY MASS SPECTROMETRY</scope>
</reference>
<reference key="17">
    <citation type="journal article" date="2008" name="Nat. Struct. Mol. Biol.">
        <title>The ankyrin repeats of G9a and GLP histone methyltransferases are mono- and dimethyllysine binding modules.</title>
        <authorList>
            <person name="Collins R.E."/>
            <person name="Northrop J.P."/>
            <person name="Horton J.R."/>
            <person name="Lee D.Y."/>
            <person name="Zhang X."/>
            <person name="Stallcup M.R."/>
            <person name="Cheng X."/>
        </authorList>
    </citation>
    <scope>DOMAIN ANK REPEATS</scope>
    <scope>MUTAGENESIS OF TRP-786; TRP-791; GLU-794; GLU-817; TRP-824 AND ASP-852</scope>
</reference>
<reference key="18">
    <citation type="journal article" date="2008" name="Proc. Natl. Acad. Sci. U.S.A.">
        <title>A quantitative atlas of mitotic phosphorylation.</title>
        <authorList>
            <person name="Dephoure N."/>
            <person name="Zhou C."/>
            <person name="Villen J."/>
            <person name="Beausoleil S.A."/>
            <person name="Bakalarski C.E."/>
            <person name="Elledge S.J."/>
            <person name="Gygi S.P."/>
        </authorList>
    </citation>
    <scope>PHOSPHORYLATION [LARGE SCALE ANALYSIS] AT SER-140; SER-173; SER-232; SER-246 AND THR-1210</scope>
    <scope>IDENTIFICATION BY MASS SPECTROMETRY [LARGE SCALE ANALYSIS]</scope>
    <source>
        <tissue>Cervix carcinoma</tissue>
    </source>
</reference>
<reference key="19">
    <citation type="journal article" date="2009" name="Anal. Chem.">
        <title>Lys-N and trypsin cover complementary parts of the phosphoproteome in a refined SCX-based approach.</title>
        <authorList>
            <person name="Gauci S."/>
            <person name="Helbig A.O."/>
            <person name="Slijper M."/>
            <person name="Krijgsveld J."/>
            <person name="Heck A.J."/>
            <person name="Mohammed S."/>
        </authorList>
    </citation>
    <scope>ACETYLATION [LARGE SCALE ANALYSIS] AT ALA-2</scope>
    <scope>CLEAVAGE OF INITIATOR METHIONINE [LARGE SCALE ANALYSIS]</scope>
    <scope>IDENTIFICATION BY MASS SPECTROMETRY [LARGE SCALE ANALYSIS]</scope>
</reference>
<reference key="20">
    <citation type="journal article" date="2009" name="Nucleic Acids Res.">
        <title>UHRF1 binds G9a and participates in p21 transcriptional regulation in mammalian cells.</title>
        <authorList>
            <person name="Kim J.K."/>
            <person name="Esteve P.O."/>
            <person name="Jacobsen S.E."/>
            <person name="Pradhan S."/>
        </authorList>
    </citation>
    <scope>INTERACTION WITH UHRF1</scope>
</reference>
<reference key="21">
    <citation type="journal article" date="2009" name="Sci. Signal.">
        <title>Quantitative phosphoproteomic analysis of T cell receptor signaling reveals system-wide modulation of protein-protein interactions.</title>
        <authorList>
            <person name="Mayya V."/>
            <person name="Lundgren D.H."/>
            <person name="Hwang S.-I."/>
            <person name="Rezaul K."/>
            <person name="Wu L."/>
            <person name="Eng J.K."/>
            <person name="Rodionov V."/>
            <person name="Han D.K."/>
        </authorList>
    </citation>
    <scope>IDENTIFICATION BY MASS SPECTROMETRY [LARGE SCALE ANALYSIS]</scope>
    <source>
        <tissue>Leukemic T-cell</tissue>
    </source>
</reference>
<reference key="22">
    <citation type="journal article" date="2010" name="J. Biol. Chem.">
        <title>G9a and Glp methylate lysine 373 in the tumor suppressor p53.</title>
        <authorList>
            <person name="Huang J."/>
            <person name="Dorsey J."/>
            <person name="Chuikov S."/>
            <person name="Perez-Burgos L."/>
            <person name="Zhang X."/>
            <person name="Jenuwein T."/>
            <person name="Reinberg D."/>
            <person name="Berger S.L."/>
        </authorList>
    </citation>
    <scope>FUNCTION</scope>
</reference>
<reference key="23">
    <citation type="journal article" date="2010" name="J. Biol. Chem.">
        <authorList>
            <person name="Huang J."/>
            <person name="Dorsey J."/>
            <person name="Chuikov S."/>
            <person name="Perez-Burgos L."/>
            <person name="Zhang X."/>
            <person name="Jenuwein T."/>
            <person name="Reinberg D."/>
            <person name="Berger S.L."/>
        </authorList>
    </citation>
    <scope>ERRATUM OF PUBMED:20118233</scope>
</reference>
<reference key="24">
    <citation type="journal article" date="2010" name="Sci. Signal.">
        <title>Quantitative phosphoproteomics reveals widespread full phosphorylation site occupancy during mitosis.</title>
        <authorList>
            <person name="Olsen J.V."/>
            <person name="Vermeulen M."/>
            <person name="Santamaria A."/>
            <person name="Kumar C."/>
            <person name="Miller M.L."/>
            <person name="Jensen L.J."/>
            <person name="Gnad F."/>
            <person name="Cox J."/>
            <person name="Jensen T.S."/>
            <person name="Nigg E.A."/>
            <person name="Brunak S."/>
            <person name="Mann M."/>
        </authorList>
    </citation>
    <scope>PHOSPHORYLATION [LARGE SCALE ANALYSIS] AT SER-140; SER-232 AND SER-246</scope>
    <scope>IDENTIFICATION BY MASS SPECTROMETRY [LARGE SCALE ANALYSIS]</scope>
    <source>
        <tissue>Cervix carcinoma</tissue>
    </source>
</reference>
<reference key="25">
    <citation type="journal article" date="2011" name="Mol. Cell">
        <title>Maintenance of silent chromatin through replication requires SWI/SNF-like chromatin remodeler SMARCAD1.</title>
        <authorList>
            <person name="Rowbotham S.P."/>
            <person name="Barki L."/>
            <person name="Neves-Costa A."/>
            <person name="Santos F."/>
            <person name="Dean W."/>
            <person name="Hawkes N."/>
            <person name="Choudhary P."/>
            <person name="Will W.R."/>
            <person name="Webster J."/>
            <person name="Oxley D."/>
            <person name="Green C.M."/>
            <person name="Varga-Weisz P."/>
            <person name="Mermoud J.E."/>
        </authorList>
    </citation>
    <scope>IDENTIFICATION IN A COMPLEX WITH TRIM28; HDAC1 AND HDAC2</scope>
</reference>
<reference key="26">
    <citation type="journal article" date="2011" name="Sci. Signal.">
        <title>System-wide temporal characterization of the proteome and phosphoproteome of human embryonic stem cell differentiation.</title>
        <authorList>
            <person name="Rigbolt K.T."/>
            <person name="Prokhorova T.A."/>
            <person name="Akimov V."/>
            <person name="Henningsen J."/>
            <person name="Johansen P.T."/>
            <person name="Kratchmarova I."/>
            <person name="Kassem M."/>
            <person name="Mann M."/>
            <person name="Olsen J.V."/>
            <person name="Blagoev B."/>
        </authorList>
    </citation>
    <scope>PHOSPHORYLATION [LARGE SCALE ANALYSIS] AT SER-140; SER-232; SER-246; SER-413 AND SER-1204</scope>
    <scope>IDENTIFICATION BY MASS SPECTROMETRY [LARGE SCALE ANALYSIS]</scope>
</reference>
<reference key="27">
    <citation type="journal article" date="2012" name="Mol. Cell">
        <title>Histone H3 lysine 56 methylation regulates DNA replication through its interaction with PCNA.</title>
        <authorList>
            <person name="Yu Y."/>
            <person name="Song C."/>
            <person name="Zhang Q."/>
            <person name="Dimaggio P.A."/>
            <person name="Garcia B.A."/>
            <person name="York A."/>
            <person name="Carey M.F."/>
            <person name="Grunstein M."/>
        </authorList>
    </citation>
    <scope>FUNCTION</scope>
</reference>
<reference key="28">
    <citation type="journal article" date="2012" name="Proc. Natl. Acad. Sci. U.S.A.">
        <title>N-terminal acetylome analyses and functional insights of the N-terminal acetyltransferase NatB.</title>
        <authorList>
            <person name="Van Damme P."/>
            <person name="Lasa M."/>
            <person name="Polevoda B."/>
            <person name="Gazquez C."/>
            <person name="Elosegui-Artola A."/>
            <person name="Kim D.S."/>
            <person name="De Juan-Pardo E."/>
            <person name="Demeyer K."/>
            <person name="Hole K."/>
            <person name="Larrea E."/>
            <person name="Timmerman E."/>
            <person name="Prieto J."/>
            <person name="Arnesen T."/>
            <person name="Sherman F."/>
            <person name="Gevaert K."/>
            <person name="Aldabe R."/>
        </authorList>
    </citation>
    <scope>ACETYLATION [LARGE SCALE ANALYSIS] AT ALA-2</scope>
    <scope>CLEAVAGE OF INITIATOR METHIONINE [LARGE SCALE ANALYSIS]</scope>
    <scope>IDENTIFICATION BY MASS SPECTROMETRY [LARGE SCALE ANALYSIS]</scope>
</reference>
<reference key="29">
    <citation type="journal article" date="2013" name="J. Proteome Res.">
        <title>Toward a comprehensive characterization of a human cancer cell phosphoproteome.</title>
        <authorList>
            <person name="Zhou H."/>
            <person name="Di Palma S."/>
            <person name="Preisinger C."/>
            <person name="Peng M."/>
            <person name="Polat A.N."/>
            <person name="Heck A.J."/>
            <person name="Mohammed S."/>
        </authorList>
    </citation>
    <scope>PHOSPHORYLATION [LARGE SCALE ANALYSIS] AT THR-44; SER-47; SER-140; SER-232; SER-242; SER-350 AND THR-555</scope>
    <scope>IDENTIFICATION BY MASS SPECTROMETRY [LARGE SCALE ANALYSIS]</scope>
    <source>
        <tissue>Cervix carcinoma</tissue>
        <tissue>Erythroleukemia</tissue>
    </source>
</reference>
<reference key="30">
    <citation type="journal article" date="2014" name="J. Proteomics">
        <title>An enzyme assisted RP-RPLC approach for in-depth analysis of human liver phosphoproteome.</title>
        <authorList>
            <person name="Bian Y."/>
            <person name="Song C."/>
            <person name="Cheng K."/>
            <person name="Dong M."/>
            <person name="Wang F."/>
            <person name="Huang J."/>
            <person name="Sun D."/>
            <person name="Wang L."/>
            <person name="Ye M."/>
            <person name="Zou H."/>
        </authorList>
    </citation>
    <scope>PHOSPHORYLATION [LARGE SCALE ANALYSIS] AT SER-40</scope>
    <scope>IDENTIFICATION BY MASS SPECTROMETRY [LARGE SCALE ANALYSIS]</scope>
    <source>
        <tissue>Liver</tissue>
    </source>
</reference>
<reference key="31">
    <citation type="journal article" date="2017" name="Nat. Struct. Mol. Biol.">
        <title>Site-specific mapping of the human SUMO proteome reveals co-modification with phosphorylation.</title>
        <authorList>
            <person name="Hendriks I.A."/>
            <person name="Lyon D."/>
            <person name="Young C."/>
            <person name="Jensen L.J."/>
            <person name="Vertegaal A.C."/>
            <person name="Nielsen M.L."/>
        </authorList>
    </citation>
    <scope>SUMOYLATION [LARGE SCALE ANALYSIS] AT LYS-219; LYS-229 AND LYS-634</scope>
    <scope>IDENTIFICATION BY MASS SPECTROMETRY [LARGE SCALE ANALYSIS]</scope>
</reference>
<reference key="32">
    <citation type="journal article" date="2010" name="PLoS ONE">
        <title>Structural biology of human H3K9 methyltransferases.</title>
        <authorList>
            <person name="Wu H."/>
            <person name="Min J."/>
            <person name="Lunin V.V."/>
            <person name="Antoshenko T."/>
            <person name="Dombrovski L."/>
            <person name="Zeng H."/>
            <person name="Allali-Hassani A."/>
            <person name="Campagna-Slater V."/>
            <person name="Vedadi M."/>
            <person name="Arrowsmith C.H."/>
            <person name="Plotnikov A.N."/>
            <person name="Schapira M."/>
        </authorList>
    </citation>
    <scope>X-RAY CRYSTALLOGRAPHY (1.8 ANGSTROMS) OF 913-1193 IN COMPLEX WITH S-ADENOSYL-L-HOMOCYSTEINE AND ZINC IONS</scope>
    <scope>FUNCTION</scope>
    <scope>CATALYTIC ACTIVITY</scope>
</reference>
<proteinExistence type="evidence at protein level"/>
<comment type="function">
    <text evidence="2 6 14 17 18 20 21">Histone methyltransferase that specifically mono- and dimethylates 'Lys-9' of histone H3 (H3K9me1 and H3K9me2, respectively) in euchromatin. H3K9me represents a specific tag for epigenetic transcriptional repression by recruiting HP1 proteins to methylated histones. Also mediates monomethylation of 'Lys-56' of histone H3 (H3K56me1) in G1 phase, leading to promote interaction between histone H3 and PCNA and regulating DNA replication. Also weakly methylates 'Lys-27' of histone H3 (H3K27me). Also required for DNA methylation, the histone methyltransferase activity is not required for DNA methylation, suggesting that these 2 activities function independently. Probably targeted to histone H3 by different DNA-binding proteins like E2F6, MGA, MAX and/or DP1. May also methylate histone H1. In addition to the histone methyltransferase activity, also methylates non-histone proteins: mediates dimethylation of 'Lys-373' of p53/TP53. Also methylates CDYL, WIZ, ACIN1, DNMT1, HDAC1, ERCC6, KLF12 and itself.</text>
</comment>
<comment type="catalytic activity">
    <reaction evidence="6 17">
        <text>N(6)-methyl-L-lysyl(9)-[histone H3] + S-adenosyl-L-methionine = N(6),N(6)-dimethyl-L-lysyl(9)-[histone H3] + S-adenosyl-L-homocysteine + H(+)</text>
        <dbReference type="Rhea" id="RHEA:60284"/>
        <dbReference type="Rhea" id="RHEA-COMP:15541"/>
        <dbReference type="Rhea" id="RHEA-COMP:15542"/>
        <dbReference type="ChEBI" id="CHEBI:15378"/>
        <dbReference type="ChEBI" id="CHEBI:57856"/>
        <dbReference type="ChEBI" id="CHEBI:59789"/>
        <dbReference type="ChEBI" id="CHEBI:61929"/>
        <dbReference type="ChEBI" id="CHEBI:61976"/>
    </reaction>
</comment>
<comment type="catalytic activity">
    <reaction evidence="6 17">
        <text>L-lysyl(9)-[histone H3] + S-adenosyl-L-methionine = N(6)-methyl-L-lysyl(9)-[histone H3] + S-adenosyl-L-homocysteine + H(+)</text>
        <dbReference type="Rhea" id="RHEA:60280"/>
        <dbReference type="Rhea" id="RHEA-COMP:15542"/>
        <dbReference type="Rhea" id="RHEA-COMP:15546"/>
        <dbReference type="ChEBI" id="CHEBI:15378"/>
        <dbReference type="ChEBI" id="CHEBI:29969"/>
        <dbReference type="ChEBI" id="CHEBI:57856"/>
        <dbReference type="ChEBI" id="CHEBI:59789"/>
        <dbReference type="ChEBI" id="CHEBI:61929"/>
        <dbReference type="EC" id="2.1.1.367"/>
    </reaction>
</comment>
<comment type="subunit">
    <text evidence="2 8 11 12 15 16 19">Heterodimer; heterodimerizes with EHMT1/GLP (PubMed:16702210). Interacts with GFI1B and WIZ (PubMed:16688220, PubMed:16702210). Part of the E2F6.com-1 complex in G0 phase composed of E2F6, MGA, MAX, TFDP1, CBX3, BAT8, EHMT1, RING1, RNF2, MBLR, L3MBTL2 and YAF2 (PubMed:12004135). Part of a complex composed of TRIM28, HDAC1, HDAC2 and EHMT2 (PubMed:21549307). Interacts with UHRF1 (PubMed:19056828). Interacts with CDYL (PubMed:19061646). Interacts with REST only in the presence of CDYL (PubMed:19061646). Part of a complex containing at least CDYL, REST, WIZ, SETB1, EHMT1 and EHMT2 (PubMed:19061646). Interacts with PRDM9 and CDYL; interaction only takes place when PRDM9 is bound to hotspot DNA (By similarity). Interacts with SMYD5 (By similarity).</text>
</comment>
<comment type="interaction">
    <interactant intactId="EBI-744366">
        <id>Q96KQ7</id>
    </interactant>
    <interactant intactId="EBI-12070560">
        <id>Q6VMQ6-2</id>
        <label>ATF7IP</label>
    </interactant>
    <organismsDiffer>false</organismsDiffer>
    <experiments>3</experiments>
</comment>
<comment type="interaction">
    <interactant intactId="EBI-744366">
        <id>Q96KQ7</id>
    </interactant>
    <interactant intactId="EBI-930143">
        <id>Q6P1J9</id>
        <label>CDC73</label>
    </interactant>
    <organismsDiffer>false</organismsDiffer>
    <experiments>3</experiments>
</comment>
<comment type="interaction">
    <interactant intactId="EBI-744366">
        <id>Q96KQ7</id>
    </interactant>
    <interactant intactId="EBI-80125">
        <id>Q9UBC3</id>
        <label>DNMT3B</label>
    </interactant>
    <organismsDiffer>false</organismsDiffer>
    <experiments>2</experiments>
</comment>
<comment type="interaction">
    <interactant intactId="EBI-744366">
        <id>Q96KQ7</id>
    </interactant>
    <interactant intactId="EBI-299104">
        <id>P38919</id>
        <label>EIF4A3</label>
    </interactant>
    <organismsDiffer>false</organismsDiffer>
    <experiments>3</experiments>
</comment>
<comment type="interaction">
    <interactant intactId="EBI-744366">
        <id>Q96KQ7</id>
    </interactant>
    <interactant intactId="EBI-946972">
        <id>Q9UM22</id>
        <label>EPDR1</label>
    </interactant>
    <organismsDiffer>false</organismsDiffer>
    <experiments>3</experiments>
</comment>
<comment type="interaction">
    <interactant intactId="EBI-744366">
        <id>Q96KQ7</id>
    </interactant>
    <interactant intactId="EBI-6664760">
        <id>P23771</id>
        <label>GATA3</label>
    </interactant>
    <organismsDiffer>false</organismsDiffer>
    <experiments>20</experiments>
</comment>
<comment type="interaction">
    <interactant intactId="EBI-744366">
        <id>Q96KQ7</id>
    </interactant>
    <interactant intactId="EBI-949368">
        <id>Q99684</id>
        <label>GFI1</label>
    </interactant>
    <organismsDiffer>false</organismsDiffer>
    <experiments>2</experiments>
</comment>
<comment type="interaction">
    <interactant intactId="EBI-744366">
        <id>Q96KQ7</id>
    </interactant>
    <interactant intactId="EBI-301834">
        <id>Q13547</id>
        <label>HDAC1</label>
    </interactant>
    <organismsDiffer>false</organismsDiffer>
    <experiments>9</experiments>
</comment>
<comment type="interaction">
    <interactant intactId="EBI-744366">
        <id>Q96KQ7</id>
    </interactant>
    <interactant intactId="EBI-726282">
        <id>Q96JB3</id>
        <label>HIC2</label>
    </interactant>
    <organismsDiffer>false</organismsDiffer>
    <experiments>3</experiments>
</comment>
<comment type="interaction">
    <interactant intactId="EBI-744366">
        <id>Q96KQ7</id>
    </interactant>
    <interactant intactId="EBI-477430">
        <id>Q92831</id>
        <label>KAT2B</label>
    </interactant>
    <organismsDiffer>false</organismsDiffer>
    <experiments>3</experiments>
</comment>
<comment type="interaction">
    <interactant intactId="EBI-744366">
        <id>Q96KQ7</id>
    </interactant>
    <interactant intactId="EBI-15599570">
        <id>O60341-1</id>
        <label>KDM1A</label>
    </interactant>
    <organismsDiffer>false</organismsDiffer>
    <experiments>2</experiments>
</comment>
<comment type="interaction">
    <interactant intactId="EBI-744366">
        <id>Q96KQ7</id>
    </interactant>
    <interactant intactId="EBI-750750">
        <id>Q9Y4X4</id>
        <label>KLF12</label>
    </interactant>
    <organismsDiffer>false</organismsDiffer>
    <experiments>5</experiments>
</comment>
<comment type="interaction">
    <interactant intactId="EBI-744366">
        <id>Q96KQ7</id>
    </interactant>
    <interactant intactId="EBI-8472267">
        <id>P57682</id>
        <label>KLF3</label>
    </interactant>
    <organismsDiffer>false</organismsDiffer>
    <experiments>4</experiments>
</comment>
<comment type="interaction">
    <interactant intactId="EBI-744366">
        <id>Q96KQ7</id>
    </interactant>
    <interactant intactId="EBI-714236">
        <id>Q13330</id>
        <label>MTA1</label>
    </interactant>
    <organismsDiffer>false</organismsDiffer>
    <experiments>9</experiments>
</comment>
<comment type="interaction">
    <interactant intactId="EBI-744366">
        <id>Q96KQ7</id>
    </interactant>
    <interactant intactId="EBI-1783035">
        <id>O94776</id>
        <label>MTA2</label>
    </interactant>
    <organismsDiffer>false</organismsDiffer>
    <experiments>7</experiments>
</comment>
<comment type="interaction">
    <interactant intactId="EBI-744366">
        <id>Q96KQ7</id>
    </interactant>
    <interactant intactId="EBI-2461787">
        <id>Q9BTC8</id>
        <label>MTA3</label>
    </interactant>
    <organismsDiffer>false</organismsDiffer>
    <experiments>18</experiments>
</comment>
<comment type="interaction">
    <interactant intactId="EBI-744366">
        <id>Q96KQ7</id>
    </interactant>
    <interactant intactId="EBI-10200618">
        <id>P20592</id>
        <label>MX2</label>
    </interactant>
    <organismsDiffer>false</organismsDiffer>
    <experiments>3</experiments>
</comment>
<comment type="interaction">
    <interactant intactId="EBI-744366">
        <id>Q96KQ7</id>
    </interactant>
    <interactant intactId="EBI-2585120">
        <id>Q9BSU3</id>
        <label>NAA11</label>
    </interactant>
    <organismsDiffer>false</organismsDiffer>
    <experiments>3</experiments>
</comment>
<comment type="interaction">
    <interactant intactId="EBI-744366">
        <id>Q96KQ7</id>
    </interactant>
    <interactant intactId="EBI-16208773">
        <id>Q99801-1</id>
        <label>NKX3-1</label>
    </interactant>
    <organismsDiffer>false</organismsDiffer>
    <experiments>3</experiments>
</comment>
<comment type="interaction">
    <interactant intactId="EBI-744366">
        <id>Q96KQ7</id>
    </interactant>
    <interactant intactId="EBI-741582">
        <id>O60568</id>
        <label>PLOD3</label>
    </interactant>
    <organismsDiffer>false</organismsDiffer>
    <experiments>8</experiments>
</comment>
<comment type="interaction">
    <interactant intactId="EBI-744366">
        <id>Q96KQ7</id>
    </interactant>
    <interactant intactId="EBI-4292031">
        <id>Q9NQX1</id>
        <label>PRDM5</label>
    </interactant>
    <organismsDiffer>false</organismsDiffer>
    <experiments>3</experiments>
</comment>
<comment type="interaction">
    <interactant intactId="EBI-744366">
        <id>Q96KQ7</id>
    </interactant>
    <interactant intactId="EBI-744891">
        <id>Q5JSZ5</id>
        <label>PRRC2B</label>
    </interactant>
    <organismsDiffer>false</organismsDiffer>
    <experiments>2</experiments>
</comment>
<comment type="interaction">
    <interactant intactId="EBI-744366">
        <id>Q96KQ7</id>
    </interactant>
    <interactant intactId="EBI-10257497">
        <id>Q7Z3Z2</id>
        <label>RD3</label>
    </interactant>
    <organismsDiffer>false</organismsDiffer>
    <experiments>3</experiments>
</comment>
<comment type="interaction">
    <interactant intactId="EBI-744366">
        <id>Q96KQ7</id>
    </interactant>
    <interactant intactId="EBI-948076">
        <id>Q9P2R6</id>
        <label>RERE</label>
    </interactant>
    <organismsDiffer>false</organismsDiffer>
    <experiments>3</experiments>
</comment>
<comment type="interaction">
    <interactant intactId="EBI-744366">
        <id>Q96KQ7</id>
    </interactant>
    <interactant intactId="EBI-11980193">
        <id>Q14119</id>
        <label>VEZF1</label>
    </interactant>
    <organismsDiffer>false</organismsDiffer>
    <experiments>3</experiments>
</comment>
<comment type="interaction">
    <interactant intactId="EBI-744366">
        <id>Q96KQ7</id>
    </interactant>
    <interactant intactId="EBI-750167">
        <id>Q96GT9</id>
        <label>XAGE2</label>
    </interactant>
    <organismsDiffer>false</organismsDiffer>
    <experiments>3</experiments>
</comment>
<comment type="interaction">
    <interactant intactId="EBI-744366">
        <id>Q96KQ7</id>
    </interactant>
    <interactant intactId="EBI-717614">
        <id>O60315</id>
        <label>ZEB2</label>
    </interactant>
    <organismsDiffer>false</organismsDiffer>
    <experiments>6</experiments>
</comment>
<comment type="interaction">
    <interactant intactId="EBI-744366">
        <id>Q96KQ7</id>
    </interactant>
    <interactant intactId="EBI-740232">
        <id>Q9NWS9-2</id>
        <label>ZNF446</label>
    </interactant>
    <organismsDiffer>false</organismsDiffer>
    <experiments>3</experiments>
</comment>
<comment type="interaction">
    <interactant intactId="EBI-744366">
        <id>Q96KQ7</id>
    </interactant>
    <interactant intactId="EBI-1210359">
        <id>Q96JM2</id>
        <label>ZNF462</label>
    </interactant>
    <organismsDiffer>false</organismsDiffer>
    <experiments>5</experiments>
</comment>
<comment type="interaction">
    <interactant intactId="EBI-744366">
        <id>Q96KQ7</id>
    </interactant>
    <interactant intactId="EBI-16429014">
        <id>A0A0S2Z5X4</id>
        <label>ZNF688</label>
    </interactant>
    <organismsDiffer>false</organismsDiffer>
    <experiments>3</experiments>
</comment>
<comment type="interaction">
    <interactant intactId="EBI-744366">
        <id>Q96KQ7</id>
    </interactant>
    <interactant intactId="EBI-7149881">
        <id>Q96BV0</id>
        <label>ZNF775</label>
    </interactant>
    <organismsDiffer>false</organismsDiffer>
    <experiments>3</experiments>
</comment>
<comment type="interaction">
    <interactant intactId="EBI-744366">
        <id>Q96KQ7</id>
    </interactant>
    <interactant intactId="EBI-11962574">
        <id>Q96EG3</id>
        <label>ZNF837</label>
    </interactant>
    <organismsDiffer>false</organismsDiffer>
    <experiments>3</experiments>
</comment>
<comment type="interaction">
    <interactant intactId="EBI-744366">
        <id>Q96KQ7</id>
    </interactant>
    <interactant intactId="EBI-4289236">
        <id>Q07120</id>
        <label>Gfi1</label>
    </interactant>
    <organismsDiffer>true</organismsDiffer>
    <experiments>3</experiments>
</comment>
<comment type="interaction">
    <interactant intactId="EBI-15737402">
        <id>Q96KQ7-1</id>
    </interactant>
    <interactant intactId="EBI-15599570">
        <id>O60341-1</id>
        <label>KDM1A</label>
    </interactant>
    <organismsDiffer>false</organismsDiffer>
    <experiments>3</experiments>
</comment>
<comment type="subcellular location">
    <subcellularLocation>
        <location evidence="6">Nucleus</location>
    </subcellularLocation>
    <subcellularLocation>
        <location evidence="6">Chromosome</location>
    </subcellularLocation>
    <text evidence="6">Associates with euchromatic regions (PubMed:11316813). Does not associate with heterochromatin (PubMed:11316813).</text>
</comment>
<comment type="alternative products">
    <event type="alternative splicing"/>
    <isoform>
        <id>Q96KQ7-1</id>
        <name>1</name>
        <sequence type="displayed"/>
    </isoform>
    <isoform>
        <id>Q96KQ7-2</id>
        <name>2</name>
        <name>NG36G9a-SPI</name>
        <sequence type="described" ref="VSP_002211"/>
    </isoform>
    <isoform>
        <id>Q96KQ7-3</id>
        <name>3</name>
        <name>NG36</name>
        <sequence type="described" ref="VSP_002212 VSP_002213"/>
    </isoform>
    <text>Additional isoforms seem to exist.</text>
</comment>
<comment type="tissue specificity">
    <text evidence="7">Expressed in all tissues examined, with high levels in fetal liver, thymus, lymph node, spleen and peripheral blood leukocytes and lower level in bone marrow.</text>
</comment>
<comment type="domain">
    <text evidence="13">The SET domain mediates interaction with WIZ.</text>
</comment>
<comment type="domain">
    <text evidence="13">The ANK repeats bind H3K9me1 and H3K9me2.</text>
</comment>
<comment type="domain">
    <text evidence="13">In the pre-SET domain, Cys residues bind 3 zinc ions that are arranged in a triangular cluster; some of these Cys residues contribute to the binding of two zinc ions within the cluster.</text>
</comment>
<comment type="PTM">
    <text evidence="14">Methylated at Lys-185; automethylated.</text>
</comment>
<comment type="similarity">
    <text evidence="4">Belongs to the class V-like SAM-binding methyltransferase superfamily. Histone-lysine methyltransferase family. Suvar3-9 subfamily.</text>
</comment>
<comment type="caution">
    <text evidence="25">While NG36 and G9a were originally thought to derive from 2 separate genes, all G9A transcripts also contain the in frame coding sequence of NG36.</text>
</comment>
<comment type="caution">
    <text evidence="24">It is uncertain whether Met-1 or Met-21 is the initiator methionine.</text>
</comment>
<comment type="sequence caution" evidence="24">
    <conflict type="erroneous gene model prediction">
        <sequence resource="EMBL-CDS" id="AAD21811"/>
    </conflict>
</comment>
<comment type="sequence caution" evidence="24">
    <conflict type="erroneous gene model prediction">
        <sequence resource="EMBL-CDS" id="AAD21812"/>
    </conflict>
</comment>
<comment type="sequence caution" evidence="24">
    <conflict type="erroneous initiation">
        <sequence resource="EMBL-CDS" id="AAH02686"/>
    </conflict>
    <text>Extended N-terminus.</text>
</comment>
<comment type="sequence caution" evidence="24">
    <conflict type="erroneous initiation">
        <sequence resource="EMBL-CDS" id="AAH09351"/>
    </conflict>
    <text>Extended N-terminus.</text>
</comment>
<comment type="sequence caution" evidence="24">
    <conflict type="erroneous initiation">
        <sequence resource="EMBL-CDS" id="AAH18718"/>
    </conflict>
    <text>Truncated N-terminus.</text>
</comment>
<comment type="sequence caution" evidence="24">
    <conflict type="erroneous initiation">
        <sequence resource="EMBL-CDS" id="AAH20970"/>
    </conflict>
    <text>Extended N-terminus.</text>
</comment>
<comment type="sequence caution" evidence="24">
    <conflict type="erroneous gene model prediction">
        <sequence resource="EMBL-CDS" id="BAB63294"/>
    </conflict>
</comment>
<comment type="sequence caution" evidence="24">
    <conflict type="erroneous gene model prediction">
        <sequence resource="EMBL-CDS" id="BAB63295"/>
    </conflict>
</comment>
<comment type="sequence caution" evidence="24">
    <conflict type="erroneous initiation">
        <sequence resource="EMBL-CDS" id="CAA49491"/>
    </conflict>
    <text>Truncated N-terminus.</text>
</comment>
<dbReference type="EC" id="2.1.1.-" evidence="6 17"/>
<dbReference type="EC" id="2.1.1.367" evidence="6 17"/>
<dbReference type="EMBL" id="AJ315532">
    <property type="protein sequence ID" value="CAC86666.1"/>
    <property type="molecule type" value="mRNA"/>
</dbReference>
<dbReference type="EMBL" id="AK056936">
    <property type="protein sequence ID" value="BAB71314.1"/>
    <property type="molecule type" value="mRNA"/>
</dbReference>
<dbReference type="EMBL" id="AF134726">
    <property type="protein sequence ID" value="AAD21811.1"/>
    <property type="status" value="ALT_SEQ"/>
    <property type="molecule type" value="Genomic_DNA"/>
</dbReference>
<dbReference type="EMBL" id="AF134726">
    <property type="protein sequence ID" value="AAD21812.1"/>
    <property type="status" value="ALT_SEQ"/>
    <property type="molecule type" value="Genomic_DNA"/>
</dbReference>
<dbReference type="EMBL" id="BA000025">
    <property type="protein sequence ID" value="BAB63294.1"/>
    <property type="status" value="ALT_SEQ"/>
    <property type="molecule type" value="Genomic_DNA"/>
</dbReference>
<dbReference type="EMBL" id="BA000025">
    <property type="protein sequence ID" value="BAB63295.1"/>
    <property type="status" value="ALT_SEQ"/>
    <property type="molecule type" value="Genomic_DNA"/>
</dbReference>
<dbReference type="EMBL" id="AL662834">
    <property type="status" value="NOT_ANNOTATED_CDS"/>
    <property type="molecule type" value="Genomic_DNA"/>
</dbReference>
<dbReference type="EMBL" id="AL671762">
    <property type="status" value="NOT_ANNOTATED_CDS"/>
    <property type="molecule type" value="Genomic_DNA"/>
</dbReference>
<dbReference type="EMBL" id="AL844853">
    <property type="status" value="NOT_ANNOTATED_CDS"/>
    <property type="molecule type" value="Genomic_DNA"/>
</dbReference>
<dbReference type="EMBL" id="CR388202">
    <property type="status" value="NOT_ANNOTATED_CDS"/>
    <property type="molecule type" value="Genomic_DNA"/>
</dbReference>
<dbReference type="EMBL" id="CR388219">
    <property type="status" value="NOT_ANNOTATED_CDS"/>
    <property type="molecule type" value="Genomic_DNA"/>
</dbReference>
<dbReference type="EMBL" id="CR759784">
    <property type="status" value="NOT_ANNOTATED_CDS"/>
    <property type="molecule type" value="Genomic_DNA"/>
</dbReference>
<dbReference type="EMBL" id="CR936237">
    <property type="status" value="NOT_ANNOTATED_CDS"/>
    <property type="molecule type" value="Genomic_DNA"/>
</dbReference>
<dbReference type="EMBL" id="CH471081">
    <property type="protein sequence ID" value="EAX03542.1"/>
    <property type="molecule type" value="Genomic_DNA"/>
</dbReference>
<dbReference type="EMBL" id="BC002686">
    <property type="protein sequence ID" value="AAH02686.2"/>
    <property type="status" value="ALT_INIT"/>
    <property type="molecule type" value="mRNA"/>
</dbReference>
<dbReference type="EMBL" id="BC009351">
    <property type="protein sequence ID" value="AAH09351.1"/>
    <property type="status" value="ALT_INIT"/>
    <property type="molecule type" value="mRNA"/>
</dbReference>
<dbReference type="EMBL" id="BC018718">
    <property type="protein sequence ID" value="AAH18718.1"/>
    <property type="status" value="ALT_INIT"/>
    <property type="molecule type" value="mRNA"/>
</dbReference>
<dbReference type="EMBL" id="BC020970">
    <property type="protein sequence ID" value="AAH20970.2"/>
    <property type="status" value="ALT_INIT"/>
    <property type="molecule type" value="mRNA"/>
</dbReference>
<dbReference type="EMBL" id="X69838">
    <property type="protein sequence ID" value="CAA49491.1"/>
    <property type="status" value="ALT_INIT"/>
    <property type="molecule type" value="mRNA"/>
</dbReference>
<dbReference type="CCDS" id="CCDS4725.1">
    <molecule id="Q96KQ7-1"/>
</dbReference>
<dbReference type="CCDS" id="CCDS4726.1">
    <molecule id="Q96KQ7-2"/>
</dbReference>
<dbReference type="RefSeq" id="NP_001276342.1">
    <property type="nucleotide sequence ID" value="NM_001289413.1"/>
</dbReference>
<dbReference type="RefSeq" id="NP_001305762.1">
    <property type="nucleotide sequence ID" value="NM_001318833.1"/>
</dbReference>
<dbReference type="RefSeq" id="NP_006700.3">
    <molecule id="Q96KQ7-1"/>
    <property type="nucleotide sequence ID" value="NM_006709.4"/>
</dbReference>
<dbReference type="RefSeq" id="NP_079532.5">
    <molecule id="Q96KQ7-2"/>
    <property type="nucleotide sequence ID" value="NM_025256.6"/>
</dbReference>
<dbReference type="PDB" id="2O8J">
    <property type="method" value="X-ray"/>
    <property type="resolution" value="1.80 A"/>
    <property type="chains" value="A/B/C/D=913-1193"/>
</dbReference>
<dbReference type="PDB" id="3DM1">
    <property type="method" value="X-ray"/>
    <property type="resolution" value="2.40 A"/>
    <property type="chains" value="B/D/F/H=179-190"/>
</dbReference>
<dbReference type="PDB" id="3K5K">
    <property type="method" value="X-ray"/>
    <property type="resolution" value="1.70 A"/>
    <property type="chains" value="A/B=913-1193"/>
</dbReference>
<dbReference type="PDB" id="3RJW">
    <property type="method" value="X-ray"/>
    <property type="resolution" value="2.56 A"/>
    <property type="chains" value="A/B=913-1193"/>
</dbReference>
<dbReference type="PDB" id="4NVQ">
    <property type="method" value="X-ray"/>
    <property type="resolution" value="2.03 A"/>
    <property type="chains" value="A/B=913-1193"/>
</dbReference>
<dbReference type="PDB" id="5JHN">
    <property type="method" value="X-ray"/>
    <property type="resolution" value="1.67 A"/>
    <property type="chains" value="A/B=916-1189"/>
</dbReference>
<dbReference type="PDB" id="5JIN">
    <property type="method" value="X-ray"/>
    <property type="resolution" value="1.85 A"/>
    <property type="chains" value="A/B=916-1189"/>
</dbReference>
<dbReference type="PDB" id="5JIY">
    <property type="method" value="X-ray"/>
    <property type="resolution" value="1.48 A"/>
    <property type="chains" value="A/B=916-1189"/>
</dbReference>
<dbReference type="PDB" id="5JJ0">
    <property type="method" value="X-ray"/>
    <property type="resolution" value="1.72 A"/>
    <property type="chains" value="A/B=916-1189"/>
</dbReference>
<dbReference type="PDB" id="5T0K">
    <property type="method" value="X-ray"/>
    <property type="resolution" value="1.70 A"/>
    <property type="chains" value="A/B=913-1193"/>
</dbReference>
<dbReference type="PDB" id="5T0M">
    <property type="method" value="X-ray"/>
    <property type="resolution" value="1.90 A"/>
    <property type="chains" value="A/B=913-1193"/>
</dbReference>
<dbReference type="PDB" id="5TTF">
    <property type="method" value="X-ray"/>
    <property type="resolution" value="1.72 A"/>
    <property type="chains" value="A/B/C/D=913-1193"/>
</dbReference>
<dbReference type="PDB" id="5TUY">
    <property type="method" value="X-ray"/>
    <property type="resolution" value="2.60 A"/>
    <property type="chains" value="A/B=921-1187"/>
</dbReference>
<dbReference type="PDB" id="5V9I">
    <property type="method" value="X-ray"/>
    <property type="resolution" value="1.74 A"/>
    <property type="chains" value="A/B/C/D=913-1193"/>
</dbReference>
<dbReference type="PDB" id="5VSC">
    <property type="method" value="X-ray"/>
    <property type="resolution" value="1.40 A"/>
    <property type="chains" value="A/B=916-1190"/>
</dbReference>
<dbReference type="PDB" id="5VSE">
    <property type="method" value="X-ray"/>
    <property type="resolution" value="1.60 A"/>
    <property type="chains" value="A/B=917-1190"/>
</dbReference>
<dbReference type="PDB" id="6MM1">
    <property type="method" value="X-ray"/>
    <property type="resolution" value="1.90 A"/>
    <property type="chains" value="A/B/C/D=419-552"/>
</dbReference>
<dbReference type="PDB" id="7BTV">
    <property type="method" value="X-ray"/>
    <property type="resolution" value="2.00 A"/>
    <property type="chains" value="A/B=913-1193"/>
</dbReference>
<dbReference type="PDB" id="7BUC">
    <property type="method" value="X-ray"/>
    <property type="resolution" value="2.60 A"/>
    <property type="chains" value="A/B=913-1193"/>
</dbReference>
<dbReference type="PDB" id="7DCF">
    <property type="method" value="X-ray"/>
    <property type="resolution" value="1.80 A"/>
    <property type="chains" value="A/B=913-1193"/>
</dbReference>
<dbReference type="PDB" id="7T7L">
    <property type="method" value="X-ray"/>
    <property type="resolution" value="2.20 A"/>
    <property type="chains" value="A/B/C/D=913-1193"/>
</dbReference>
<dbReference type="PDB" id="7X73">
    <property type="method" value="X-ray"/>
    <property type="resolution" value="1.49 A"/>
    <property type="chains" value="A/B=913-1193"/>
</dbReference>
<dbReference type="PDB" id="7XUA">
    <property type="method" value="X-ray"/>
    <property type="resolution" value="1.87 A"/>
    <property type="chains" value="A/B=913-1193"/>
</dbReference>
<dbReference type="PDB" id="7XUB">
    <property type="method" value="X-ray"/>
    <property type="resolution" value="2.00 A"/>
    <property type="chains" value="A/B=913-1193"/>
</dbReference>
<dbReference type="PDB" id="7XUC">
    <property type="method" value="X-ray"/>
    <property type="resolution" value="1.67 A"/>
    <property type="chains" value="A/B=913-1193"/>
</dbReference>
<dbReference type="PDB" id="7XUD">
    <property type="method" value="X-ray"/>
    <property type="resolution" value="1.45 A"/>
    <property type="chains" value="A/B=913-1193"/>
</dbReference>
<dbReference type="PDB" id="8VV8">
    <property type="method" value="X-ray"/>
    <property type="resolution" value="2.00 A"/>
    <property type="chains" value="A/B=913-1193"/>
</dbReference>
<dbReference type="PDB" id="8Z7C">
    <property type="method" value="X-ray"/>
    <property type="resolution" value="1.52 A"/>
    <property type="chains" value="A/B=913-1193"/>
</dbReference>
<dbReference type="PDB" id="8Z7D">
    <property type="method" value="X-ray"/>
    <property type="resolution" value="1.58 A"/>
    <property type="chains" value="A/B=913-1193"/>
</dbReference>
<dbReference type="PDB" id="8Z7E">
    <property type="method" value="X-ray"/>
    <property type="resolution" value="1.54 A"/>
    <property type="chains" value="A/B=913-1193"/>
</dbReference>
<dbReference type="PDBsum" id="2O8J"/>
<dbReference type="PDBsum" id="3DM1"/>
<dbReference type="PDBsum" id="3K5K"/>
<dbReference type="PDBsum" id="3RJW"/>
<dbReference type="PDBsum" id="4NVQ"/>
<dbReference type="PDBsum" id="5JHN"/>
<dbReference type="PDBsum" id="5JIN"/>
<dbReference type="PDBsum" id="5JIY"/>
<dbReference type="PDBsum" id="5JJ0"/>
<dbReference type="PDBsum" id="5T0K"/>
<dbReference type="PDBsum" id="5T0M"/>
<dbReference type="PDBsum" id="5TTF"/>
<dbReference type="PDBsum" id="5TUY"/>
<dbReference type="PDBsum" id="5V9I"/>
<dbReference type="PDBsum" id="5VSC"/>
<dbReference type="PDBsum" id="5VSE"/>
<dbReference type="PDBsum" id="6MM1"/>
<dbReference type="PDBsum" id="7BTV"/>
<dbReference type="PDBsum" id="7BUC"/>
<dbReference type="PDBsum" id="7DCF"/>
<dbReference type="PDBsum" id="7T7L"/>
<dbReference type="PDBsum" id="7X73"/>
<dbReference type="PDBsum" id="7XUA"/>
<dbReference type="PDBsum" id="7XUB"/>
<dbReference type="PDBsum" id="7XUC"/>
<dbReference type="PDBsum" id="7XUD"/>
<dbReference type="PDBsum" id="8VV8"/>
<dbReference type="PDBsum" id="8Z7C"/>
<dbReference type="PDBsum" id="8Z7D"/>
<dbReference type="PDBsum" id="8Z7E"/>
<dbReference type="SMR" id="Q96KQ7"/>
<dbReference type="BioGRID" id="116123">
    <property type="interactions" value="315"/>
</dbReference>
<dbReference type="CORUM" id="Q96KQ7"/>
<dbReference type="DIP" id="DIP-34461N"/>
<dbReference type="FunCoup" id="Q96KQ7">
    <property type="interactions" value="3186"/>
</dbReference>
<dbReference type="IntAct" id="Q96KQ7">
    <property type="interactions" value="190"/>
</dbReference>
<dbReference type="MINT" id="Q96KQ7"/>
<dbReference type="STRING" id="9606.ENSP00000379078"/>
<dbReference type="BindingDB" id="Q96KQ7"/>
<dbReference type="ChEMBL" id="CHEMBL6032"/>
<dbReference type="DrugCentral" id="Q96KQ7"/>
<dbReference type="GuidetoPHARMACOLOGY" id="2652"/>
<dbReference type="GlyGen" id="Q96KQ7">
    <property type="glycosylation" value="2 sites, 1 O-linked glycan (1 site)"/>
</dbReference>
<dbReference type="iPTMnet" id="Q96KQ7"/>
<dbReference type="MetOSite" id="Q96KQ7"/>
<dbReference type="PhosphoSitePlus" id="Q96KQ7"/>
<dbReference type="SwissPalm" id="Q96KQ7"/>
<dbReference type="BioMuta" id="EHMT2"/>
<dbReference type="DMDM" id="116241348"/>
<dbReference type="jPOST" id="Q96KQ7"/>
<dbReference type="MassIVE" id="Q96KQ7"/>
<dbReference type="PaxDb" id="9606-ENSP00000364678"/>
<dbReference type="PeptideAtlas" id="Q96KQ7"/>
<dbReference type="ProteomicsDB" id="77102">
    <molecule id="Q96KQ7-1"/>
</dbReference>
<dbReference type="ProteomicsDB" id="77103">
    <molecule id="Q96KQ7-2"/>
</dbReference>
<dbReference type="ProteomicsDB" id="77104">
    <molecule id="Q96KQ7-3"/>
</dbReference>
<dbReference type="Pumba" id="Q96KQ7"/>
<dbReference type="ABCD" id="Q96KQ7">
    <property type="antibodies" value="2 sequenced antibodies"/>
</dbReference>
<dbReference type="Antibodypedia" id="27888">
    <property type="antibodies" value="371 antibodies from 40 providers"/>
</dbReference>
<dbReference type="DNASU" id="10919"/>
<dbReference type="Ensembl" id="ENST00000375530.8">
    <molecule id="Q96KQ7-2"/>
    <property type="protein sequence ID" value="ENSP00000364680.4"/>
    <property type="gene ID" value="ENSG00000204371.12"/>
</dbReference>
<dbReference type="Ensembl" id="ENST00000375537.9">
    <molecule id="Q96KQ7-1"/>
    <property type="protein sequence ID" value="ENSP00000364687.4"/>
    <property type="gene ID" value="ENSG00000204371.12"/>
</dbReference>
<dbReference type="Ensembl" id="ENST00000383372.6">
    <molecule id="Q96KQ7-2"/>
    <property type="protein sequence ID" value="ENSP00000372863.2"/>
    <property type="gene ID" value="ENSG00000206376.9"/>
</dbReference>
<dbReference type="Ensembl" id="ENST00000383373.8">
    <molecule id="Q96KQ7-1"/>
    <property type="protein sequence ID" value="ENSP00000372864.4"/>
    <property type="gene ID" value="ENSG00000206376.9"/>
</dbReference>
<dbReference type="Ensembl" id="ENST00000420336.6">
    <property type="protein sequence ID" value="ENSP00000396119.2"/>
    <property type="gene ID" value="ENSG00000238134.8"/>
</dbReference>
<dbReference type="Ensembl" id="ENST00000420874.5">
    <molecule id="Q96KQ7-2"/>
    <property type="protein sequence ID" value="ENSP00000411035.1"/>
    <property type="gene ID" value="ENSG00000236759.7"/>
</dbReference>
<dbReference type="Ensembl" id="ENST00000421926.6">
    <property type="protein sequence ID" value="ENSP00000416957.2"/>
    <property type="gene ID" value="ENSG00000232045.7"/>
</dbReference>
<dbReference type="Ensembl" id="ENST00000429506.6">
    <molecule id="Q96KQ7-1"/>
    <property type="protein sequence ID" value="ENSP00000406110.2"/>
    <property type="gene ID" value="ENSG00000227333.8"/>
</dbReference>
<dbReference type="Ensembl" id="ENST00000450075.6">
    <molecule id="Q96KQ7-1"/>
    <property type="protein sequence ID" value="ENSP00000392305.2"/>
    <property type="gene ID" value="ENSG00000236759.7"/>
</dbReference>
<dbReference type="Ensembl" id="ENST00000450229.5">
    <molecule id="Q96KQ7-2"/>
    <property type="protein sequence ID" value="ENSP00000400838.1"/>
    <property type="gene ID" value="ENSG00000227333.8"/>
</dbReference>
<dbReference type="GeneID" id="10919"/>
<dbReference type="KEGG" id="hsa:10919"/>
<dbReference type="MANE-Select" id="ENST00000375537.9">
    <property type="protein sequence ID" value="ENSP00000364687.4"/>
    <property type="RefSeq nucleotide sequence ID" value="NM_006709.5"/>
    <property type="RefSeq protein sequence ID" value="NP_006700.3"/>
</dbReference>
<dbReference type="UCSC" id="uc003nxz.3">
    <molecule id="Q96KQ7-1"/>
    <property type="organism name" value="human"/>
</dbReference>
<dbReference type="AGR" id="HGNC:14129"/>
<dbReference type="CTD" id="10919"/>
<dbReference type="DisGeNET" id="10919"/>
<dbReference type="GeneCards" id="EHMT2"/>
<dbReference type="HGNC" id="HGNC:14129">
    <property type="gene designation" value="EHMT2"/>
</dbReference>
<dbReference type="HPA" id="ENSG00000204371">
    <property type="expression patterns" value="Low tissue specificity"/>
</dbReference>
<dbReference type="MIM" id="604599">
    <property type="type" value="gene"/>
</dbReference>
<dbReference type="neXtProt" id="NX_Q96KQ7"/>
<dbReference type="OpenTargets" id="ENSG00000204371"/>
<dbReference type="PharmGKB" id="PA25267"/>
<dbReference type="VEuPathDB" id="HostDB:ENSG00000204371"/>
<dbReference type="eggNOG" id="KOG1082">
    <property type="taxonomic scope" value="Eukaryota"/>
</dbReference>
<dbReference type="GeneTree" id="ENSGT00940000159459"/>
<dbReference type="InParanoid" id="Q96KQ7"/>
<dbReference type="OrthoDB" id="5792673at2759"/>
<dbReference type="PAN-GO" id="Q96KQ7">
    <property type="GO annotations" value="8 GO annotations based on evolutionary models"/>
</dbReference>
<dbReference type="PhylomeDB" id="Q96KQ7"/>
<dbReference type="TreeFam" id="TF106443"/>
<dbReference type="BioCyc" id="MetaCyc:HS06313-MONOMER"/>
<dbReference type="BRENDA" id="2.1.1.355">
    <property type="organism ID" value="2681"/>
</dbReference>
<dbReference type="BRENDA" id="2.1.1.356">
    <property type="organism ID" value="2681"/>
</dbReference>
<dbReference type="BRENDA" id="2.1.1.367">
    <property type="organism ID" value="2681"/>
</dbReference>
<dbReference type="BRENDA" id="2.1.1.368">
    <property type="organism ID" value="2681"/>
</dbReference>
<dbReference type="PathwayCommons" id="Q96KQ7"/>
<dbReference type="Reactome" id="R-HSA-2559582">
    <property type="pathway name" value="Senescence-Associated Secretory Phenotype (SASP)"/>
</dbReference>
<dbReference type="Reactome" id="R-HSA-3214841">
    <property type="pathway name" value="PKMTs methylate histone lysines"/>
</dbReference>
<dbReference type="Reactome" id="R-HSA-427389">
    <property type="pathway name" value="ERCC6 (CSB) and EHMT2 (G9a) positively regulate rRNA expression"/>
</dbReference>
<dbReference type="Reactome" id="R-HSA-6804760">
    <property type="pathway name" value="Regulation of TP53 Activity through Methylation"/>
</dbReference>
<dbReference type="Reactome" id="R-HSA-73762">
    <property type="pathway name" value="RNA Polymerase I Transcription Initiation"/>
</dbReference>
<dbReference type="Reactome" id="R-HSA-8853884">
    <property type="pathway name" value="Transcriptional Regulation by VENTX"/>
</dbReference>
<dbReference type="Reactome" id="R-HSA-8953750">
    <property type="pathway name" value="Transcriptional Regulation by E2F6"/>
</dbReference>
<dbReference type="Reactome" id="R-HSA-9843970">
    <property type="pathway name" value="Regulation of endogenous retroelements by the Human Silencing Hub (HUSH) complex"/>
</dbReference>
<dbReference type="SignaLink" id="Q96KQ7"/>
<dbReference type="SIGNOR" id="Q96KQ7"/>
<dbReference type="BioGRID-ORCS" id="10919">
    <property type="hits" value="106 hits in 1179 CRISPR screens"/>
</dbReference>
<dbReference type="ChiTaRS" id="EHMT2">
    <property type="organism name" value="human"/>
</dbReference>
<dbReference type="EvolutionaryTrace" id="Q96KQ7"/>
<dbReference type="GeneWiki" id="EHMT2"/>
<dbReference type="GenomeRNAi" id="10919"/>
<dbReference type="Pharos" id="Q96KQ7">
    <property type="development level" value="Tchem"/>
</dbReference>
<dbReference type="PRO" id="PR:Q96KQ7"/>
<dbReference type="Proteomes" id="UP000005640">
    <property type="component" value="Chromosome 6"/>
</dbReference>
<dbReference type="RNAct" id="Q96KQ7">
    <property type="molecule type" value="protein"/>
</dbReference>
<dbReference type="Bgee" id="ENSG00000204371">
    <property type="expression patterns" value="Expressed in nucleus accumbens and 99 other cell types or tissues"/>
</dbReference>
<dbReference type="ExpressionAtlas" id="Q96KQ7">
    <property type="expression patterns" value="baseline and differential"/>
</dbReference>
<dbReference type="GO" id="GO:0000785">
    <property type="term" value="C:chromatin"/>
    <property type="evidence" value="ECO:0000314"/>
    <property type="project" value="MGI"/>
</dbReference>
<dbReference type="GO" id="GO:0016607">
    <property type="term" value="C:nuclear speck"/>
    <property type="evidence" value="ECO:0000314"/>
    <property type="project" value="HPA"/>
</dbReference>
<dbReference type="GO" id="GO:0005654">
    <property type="term" value="C:nucleoplasm"/>
    <property type="evidence" value="ECO:0000314"/>
    <property type="project" value="HPA"/>
</dbReference>
<dbReference type="GO" id="GO:0005634">
    <property type="term" value="C:nucleus"/>
    <property type="evidence" value="ECO:0000314"/>
    <property type="project" value="MGI"/>
</dbReference>
<dbReference type="GO" id="GO:0070742">
    <property type="term" value="F:C2H2 zinc finger domain binding"/>
    <property type="evidence" value="ECO:0000353"/>
    <property type="project" value="UniProtKB"/>
</dbReference>
<dbReference type="GO" id="GO:0046976">
    <property type="term" value="F:histone H3K27 methyltransferase activity"/>
    <property type="evidence" value="ECO:0000250"/>
    <property type="project" value="UniProtKB"/>
</dbReference>
<dbReference type="GO" id="GO:0140759">
    <property type="term" value="F:histone H3K56 methyltransferase activity"/>
    <property type="evidence" value="ECO:0000315"/>
    <property type="project" value="UniProtKB"/>
</dbReference>
<dbReference type="GO" id="GO:0046974">
    <property type="term" value="F:histone H3K9 methyltransferase activity"/>
    <property type="evidence" value="ECO:0000250"/>
    <property type="project" value="UniProtKB"/>
</dbReference>
<dbReference type="GO" id="GO:0140947">
    <property type="term" value="F:histone H3K9me2 methyltransferase activity"/>
    <property type="evidence" value="ECO:0007669"/>
    <property type="project" value="RHEA"/>
</dbReference>
<dbReference type="GO" id="GO:0002039">
    <property type="term" value="F:p53 binding"/>
    <property type="evidence" value="ECO:0000353"/>
    <property type="project" value="UniProtKB"/>
</dbReference>
<dbReference type="GO" id="GO:1990841">
    <property type="term" value="F:promoter-specific chromatin binding"/>
    <property type="evidence" value="ECO:0000314"/>
    <property type="project" value="MGI"/>
</dbReference>
<dbReference type="GO" id="GO:0016279">
    <property type="term" value="F:protein-lysine N-methyltransferase activity"/>
    <property type="evidence" value="ECO:0000314"/>
    <property type="project" value="UniProtKB"/>
</dbReference>
<dbReference type="GO" id="GO:0000977">
    <property type="term" value="F:RNA polymerase II transcription regulatory region sequence-specific DNA binding"/>
    <property type="evidence" value="ECO:0007669"/>
    <property type="project" value="Ensembl"/>
</dbReference>
<dbReference type="GO" id="GO:0001222">
    <property type="term" value="F:transcription corepressor binding"/>
    <property type="evidence" value="ECO:0000353"/>
    <property type="project" value="ARUK-UCL"/>
</dbReference>
<dbReference type="GO" id="GO:0008270">
    <property type="term" value="F:zinc ion binding"/>
    <property type="evidence" value="ECO:0007669"/>
    <property type="project" value="InterPro"/>
</dbReference>
<dbReference type="GO" id="GO:0048148">
    <property type="term" value="P:behavioral response to cocaine"/>
    <property type="evidence" value="ECO:0007669"/>
    <property type="project" value="Ensembl"/>
</dbReference>
<dbReference type="GO" id="GO:0071314">
    <property type="term" value="P:cellular response to cocaine"/>
    <property type="evidence" value="ECO:0007669"/>
    <property type="project" value="Ensembl"/>
</dbReference>
<dbReference type="GO" id="GO:0009267">
    <property type="term" value="P:cellular response to starvation"/>
    <property type="evidence" value="ECO:0000314"/>
    <property type="project" value="MGI"/>
</dbReference>
<dbReference type="GO" id="GO:0006346">
    <property type="term" value="P:DNA methylation-dependent constitutive heterochromatin formation"/>
    <property type="evidence" value="ECO:0000250"/>
    <property type="project" value="UniProtKB"/>
</dbReference>
<dbReference type="GO" id="GO:0040029">
    <property type="term" value="P:epigenetic regulation of gene expression"/>
    <property type="evidence" value="ECO:0000318"/>
    <property type="project" value="GO_Central"/>
</dbReference>
<dbReference type="GO" id="GO:0009566">
    <property type="term" value="P:fertilization"/>
    <property type="evidence" value="ECO:0007669"/>
    <property type="project" value="Ensembl"/>
</dbReference>
<dbReference type="GO" id="GO:1902902">
    <property type="term" value="P:negative regulation of autophagosome assembly"/>
    <property type="evidence" value="ECO:0007669"/>
    <property type="project" value="Ensembl"/>
</dbReference>
<dbReference type="GO" id="GO:0044027">
    <property type="term" value="P:negative regulation of gene expression via chromosomal CpG island methylation"/>
    <property type="evidence" value="ECO:0007669"/>
    <property type="project" value="Ensembl"/>
</dbReference>
<dbReference type="GO" id="GO:0000122">
    <property type="term" value="P:negative regulation of transcription by RNA polymerase II"/>
    <property type="evidence" value="ECO:0000314"/>
    <property type="project" value="MGI"/>
</dbReference>
<dbReference type="GO" id="GO:0048665">
    <property type="term" value="P:neuron fate specification"/>
    <property type="evidence" value="ECO:0007669"/>
    <property type="project" value="Ensembl"/>
</dbReference>
<dbReference type="GO" id="GO:0048599">
    <property type="term" value="P:oocyte development"/>
    <property type="evidence" value="ECO:0007669"/>
    <property type="project" value="Ensembl"/>
</dbReference>
<dbReference type="GO" id="GO:0035265">
    <property type="term" value="P:organ growth"/>
    <property type="evidence" value="ECO:0007669"/>
    <property type="project" value="Ensembl"/>
</dbReference>
<dbReference type="GO" id="GO:0018027">
    <property type="term" value="P:peptidyl-lysine dimethylation"/>
    <property type="evidence" value="ECO:0000314"/>
    <property type="project" value="UniProtKB"/>
</dbReference>
<dbReference type="GO" id="GO:0036166">
    <property type="term" value="P:phenotypic switching"/>
    <property type="evidence" value="ECO:0007669"/>
    <property type="project" value="Ensembl"/>
</dbReference>
<dbReference type="GO" id="GO:0006275">
    <property type="term" value="P:regulation of DNA replication"/>
    <property type="evidence" value="ECO:0000315"/>
    <property type="project" value="UniProtKB"/>
</dbReference>
<dbReference type="GO" id="GO:0007286">
    <property type="term" value="P:spermatid development"/>
    <property type="evidence" value="ECO:0007669"/>
    <property type="project" value="Ensembl"/>
</dbReference>
<dbReference type="GO" id="GO:0007130">
    <property type="term" value="P:synaptonemal complex assembly"/>
    <property type="evidence" value="ECO:0007669"/>
    <property type="project" value="Ensembl"/>
</dbReference>
<dbReference type="CDD" id="cd20905">
    <property type="entry name" value="EHMT_ZBD"/>
    <property type="match status" value="1"/>
</dbReference>
<dbReference type="CDD" id="cd10533">
    <property type="entry name" value="SET_EHMT2"/>
    <property type="match status" value="1"/>
</dbReference>
<dbReference type="FunFam" id="2.170.270.10:FF:000005">
    <property type="entry name" value="Euchromatic histone-lysine N-methyltransferase 2"/>
    <property type="match status" value="1"/>
</dbReference>
<dbReference type="FunFam" id="1.25.40.20:FF:000029">
    <property type="entry name" value="histone-lysine N-methyltransferase EHMT1 isoform X2"/>
    <property type="match status" value="1"/>
</dbReference>
<dbReference type="Gene3D" id="1.25.40.20">
    <property type="entry name" value="Ankyrin repeat-containing domain"/>
    <property type="match status" value="1"/>
</dbReference>
<dbReference type="Gene3D" id="2.170.270.10">
    <property type="entry name" value="SET domain"/>
    <property type="match status" value="1"/>
</dbReference>
<dbReference type="IDEAL" id="IID00250"/>
<dbReference type="InterPro" id="IPR002110">
    <property type="entry name" value="Ankyrin_rpt"/>
</dbReference>
<dbReference type="InterPro" id="IPR036770">
    <property type="entry name" value="Ankyrin_rpt-contain_sf"/>
</dbReference>
<dbReference type="InterPro" id="IPR043550">
    <property type="entry name" value="EHMT1/EHMT2"/>
</dbReference>
<dbReference type="InterPro" id="IPR047762">
    <property type="entry name" value="EHMT_CRR"/>
</dbReference>
<dbReference type="InterPro" id="IPR007728">
    <property type="entry name" value="Pre-SET_dom"/>
</dbReference>
<dbReference type="InterPro" id="IPR001214">
    <property type="entry name" value="SET_dom"/>
</dbReference>
<dbReference type="InterPro" id="IPR046341">
    <property type="entry name" value="SET_dom_sf"/>
</dbReference>
<dbReference type="InterPro" id="IPR038034">
    <property type="entry name" value="SET_EHMT2"/>
</dbReference>
<dbReference type="PANTHER" id="PTHR46307">
    <property type="entry name" value="G9A, ISOFORM B"/>
    <property type="match status" value="1"/>
</dbReference>
<dbReference type="PANTHER" id="PTHR46307:SF1">
    <property type="entry name" value="HISTONE-LYSINE N-METHYLTRANSFERASE EHMT2"/>
    <property type="match status" value="1"/>
</dbReference>
<dbReference type="Pfam" id="PF00023">
    <property type="entry name" value="Ank"/>
    <property type="match status" value="1"/>
</dbReference>
<dbReference type="Pfam" id="PF12796">
    <property type="entry name" value="Ank_2"/>
    <property type="match status" value="2"/>
</dbReference>
<dbReference type="Pfam" id="PF21533">
    <property type="entry name" value="EHMT1-2_CRR"/>
    <property type="match status" value="1"/>
</dbReference>
<dbReference type="Pfam" id="PF05033">
    <property type="entry name" value="Pre-SET"/>
    <property type="match status" value="1"/>
</dbReference>
<dbReference type="Pfam" id="PF00856">
    <property type="entry name" value="SET"/>
    <property type="match status" value="1"/>
</dbReference>
<dbReference type="PRINTS" id="PR01415">
    <property type="entry name" value="ANKYRIN"/>
</dbReference>
<dbReference type="SMART" id="SM00248">
    <property type="entry name" value="ANK"/>
    <property type="match status" value="6"/>
</dbReference>
<dbReference type="SMART" id="SM00468">
    <property type="entry name" value="PreSET"/>
    <property type="match status" value="1"/>
</dbReference>
<dbReference type="SMART" id="SM00317">
    <property type="entry name" value="SET"/>
    <property type="match status" value="1"/>
</dbReference>
<dbReference type="SUPFAM" id="SSF48403">
    <property type="entry name" value="Ankyrin repeat"/>
    <property type="match status" value="1"/>
</dbReference>
<dbReference type="SUPFAM" id="SSF82199">
    <property type="entry name" value="SET domain"/>
    <property type="match status" value="1"/>
</dbReference>
<dbReference type="PROSITE" id="PS50297">
    <property type="entry name" value="ANK_REP_REGION"/>
    <property type="match status" value="1"/>
</dbReference>
<dbReference type="PROSITE" id="PS50088">
    <property type="entry name" value="ANK_REPEAT"/>
    <property type="match status" value="5"/>
</dbReference>
<dbReference type="PROSITE" id="PS50867">
    <property type="entry name" value="PRE_SET"/>
    <property type="match status" value="1"/>
</dbReference>
<dbReference type="PROSITE" id="PS50280">
    <property type="entry name" value="SET"/>
    <property type="match status" value="1"/>
</dbReference>
<evidence type="ECO:0000250" key="1"/>
<evidence type="ECO:0000250" key="2">
    <source>
        <dbReference type="UniProtKB" id="Q9Z148"/>
    </source>
</evidence>
<evidence type="ECO:0000255" key="3">
    <source>
        <dbReference type="PROSITE-ProRule" id="PRU00157"/>
    </source>
</evidence>
<evidence type="ECO:0000255" key="4">
    <source>
        <dbReference type="PROSITE-ProRule" id="PRU00190"/>
    </source>
</evidence>
<evidence type="ECO:0000256" key="5">
    <source>
        <dbReference type="SAM" id="MobiDB-lite"/>
    </source>
</evidence>
<evidence type="ECO:0000269" key="6">
    <source>
    </source>
</evidence>
<evidence type="ECO:0000269" key="7">
    <source>
    </source>
</evidence>
<evidence type="ECO:0000269" key="8">
    <source>
    </source>
</evidence>
<evidence type="ECO:0000269" key="9">
    <source>
    </source>
</evidence>
<evidence type="ECO:0000269" key="10">
    <source>
    </source>
</evidence>
<evidence type="ECO:0000269" key="11">
    <source>
    </source>
</evidence>
<evidence type="ECO:0000269" key="12">
    <source>
    </source>
</evidence>
<evidence type="ECO:0000269" key="13">
    <source>
    </source>
</evidence>
<evidence type="ECO:0000269" key="14">
    <source>
    </source>
</evidence>
<evidence type="ECO:0000269" key="15">
    <source>
    </source>
</evidence>
<evidence type="ECO:0000269" key="16">
    <source>
    </source>
</evidence>
<evidence type="ECO:0000269" key="17">
    <source>
    </source>
</evidence>
<evidence type="ECO:0000269" key="18">
    <source>
    </source>
</evidence>
<evidence type="ECO:0000269" key="19">
    <source>
    </source>
</evidence>
<evidence type="ECO:0000269" key="20">
    <source>
    </source>
</evidence>
<evidence type="ECO:0000269" key="21">
    <source>
    </source>
</evidence>
<evidence type="ECO:0000269" key="22">
    <source ref="5"/>
</evidence>
<evidence type="ECO:0000303" key="23">
    <source>
    </source>
</evidence>
<evidence type="ECO:0000305" key="24"/>
<evidence type="ECO:0000305" key="25">
    <source>
    </source>
</evidence>
<evidence type="ECO:0007744" key="26">
    <source>
    </source>
</evidence>
<evidence type="ECO:0007744" key="27">
    <source>
    </source>
</evidence>
<evidence type="ECO:0007744" key="28">
    <source>
    </source>
</evidence>
<evidence type="ECO:0007744" key="29">
    <source>
    </source>
</evidence>
<evidence type="ECO:0007744" key="30">
    <source>
    </source>
</evidence>
<evidence type="ECO:0007744" key="31">
    <source>
    </source>
</evidence>
<evidence type="ECO:0007744" key="32">
    <source>
    </source>
</evidence>
<evidence type="ECO:0007744" key="33">
    <source>
    </source>
</evidence>
<evidence type="ECO:0007744" key="34">
    <source>
    </source>
</evidence>
<evidence type="ECO:0007744" key="35">
    <source>
    </source>
</evidence>
<evidence type="ECO:0007829" key="36">
    <source>
        <dbReference type="PDB" id="3K5K"/>
    </source>
</evidence>
<evidence type="ECO:0007829" key="37">
    <source>
        <dbReference type="PDB" id="5VSC"/>
    </source>
</evidence>
<evidence type="ECO:0007829" key="38">
    <source>
        <dbReference type="PDB" id="6MM1"/>
    </source>
</evidence>
<evidence type="ECO:0007829" key="39">
    <source>
        <dbReference type="PDB" id="7X73"/>
    </source>
</evidence>
<evidence type="ECO:0007829" key="40">
    <source>
        <dbReference type="PDB" id="7XUD"/>
    </source>
</evidence>
<sequence>MAAAAGAAAAAAAEGEAPAEMGALLLEKETRGATERVHGSLGDTPRSEETLPKATPDSLEPAGPSSPASVTVTVGDEGADTPVGATPLIGDESENLEGDGDLRGGRILLGHATKSFPSSPSKGGSCPSRAKMSMTGAGKSPPSVQSLAMRLLSMPGAQGAAAAGSEPPPATTSPEGQPKVHRARKTMSKPGNGQPPVPEKRPPEIQHFRMSDDVHSLGKVTSDLAKRRKLNSGGGLSEELGSARRSGEVTLTKGDPGSLEEWETVVGDDFSLYYDSYSVDERVDSDSKSEVEALTEQLSEEEEEEEEEEEEEEEEEEEEEEEEDEESGNQSDRSGSSGRRKAKKKWRKDSPWVKPSRKRRKREPPRAKEPRGVNGVGSSGPSEYMEVPLGSLELPSEGTLSPNHAGVSNDTSSLETERGFEELPLCSCRMEAPKIDRISERAGHKCMATESVDGELSGCNAAILKRETMRPSSRVALMVLCETHRARMVKHHCCPGCGYFCTAGTFLECHPDFRVAHRFHKACVSQLNGMVFCPHCGEDASEAQEVTIPRGDGVTPPAGTAAPAPPPLSQDVPGRADTSQPSARMRGHGEPRRPPCDPLADTIDSSGPSLTLPNGGCLSAVGLPLGPGREALEKALVIQESERRKKLRFHPRQLYLSVKQGELQKVILMLLDNLDPNFQSDQQSKRTPLHAAAQKGSVEICHVLLQAGANINAVDKQQRTPLMEAVVNNHLEVARYMVQRGGCVYSKEEDGSTCLHHAAKIGNLEMVSLLLSTGQVDVNAQDSGGWTPIIWAAEHKHIEVIRMLLTRGADVTLTDNEENICLHWASFTGSAAIAEVLLNARCDLHAVNYHGDTPLHIAARESYHDCVLLFLSRGANPELRNKEGDTAWDLTPERSDVWFALQLNRKLRLGVGNRAIRTEKIICRDVARGYENVPIPCVNGVDGEPCPEDYKYISENCETSTMNIDRNITHLQHCTCVDDCSSSNCLCGQLSIRCWYDKDGRLLQEFNKIEPPLIFECNQACSCWRNCKNRVVQSGIKVRLQLYRTAKMGWGVRALQTIPQGTFICEYVGELISDAEADVREDDSYLFDLDNKDGEVYCIDARYYGNISRFINHLCDPNIIPVRVFMLHQDLRFPRIAFFSSRDIRTGEELGFDYGDRFWDIKSKYFTCQCGSEKCKHSAEAIALEQSRLARLDPHPELLPELGSLPPVNT</sequence>
<name>EHMT2_HUMAN</name>
<organism>
    <name type="scientific">Homo sapiens</name>
    <name type="common">Human</name>
    <dbReference type="NCBI Taxonomy" id="9606"/>
    <lineage>
        <taxon>Eukaryota</taxon>
        <taxon>Metazoa</taxon>
        <taxon>Chordata</taxon>
        <taxon>Craniata</taxon>
        <taxon>Vertebrata</taxon>
        <taxon>Euteleostomi</taxon>
        <taxon>Mammalia</taxon>
        <taxon>Eutheria</taxon>
        <taxon>Euarchontoglires</taxon>
        <taxon>Primates</taxon>
        <taxon>Haplorrhini</taxon>
        <taxon>Catarrhini</taxon>
        <taxon>Hominidae</taxon>
        <taxon>Homo</taxon>
    </lineage>
</organism>